<accession>Q9H9B1</accession>
<accession>B1AQ58</accession>
<accession>B1AQ59</accession>
<accession>Q86X08</accession>
<accession>Q8TCN7</accession>
<accession>Q96F53</accession>
<accession>Q96JF1</accession>
<accession>Q96KH4</accession>
<sequence>MAAADAEAVPARGEPQQDCCVKTELLGEETPMAADEGSAEKQAGEAHMAADGETNGSCENSDASSHANAAKHTQDSARVNPQDGTNTLTRIAENGVSERDSEAAKQNHVTADDFVQTSVIGSNGYILNKPALQAQPLRTTSTLASSLPGHAAKTLPGGAGKGRTPSAFPQTPAAPPATLGEGSADTEDRKLPAPGADVKVHRARKTMPKSVVGLHAASKDPREVREARDHKEPKEEINKNISDFGRQQLLPPFPSLHQSLPQNQCYMATTKSQTACLPFVLAAAVSRKKKRRMGTYSLVPKKKTKVLKQRTVIEMFKSITHSTVGSKGEKDLGASSLHVNGESLEMDSDEDDSEELEEDDGHGAEQAAAFPTEDSRTSKESMSEADRAQKMDGESEEEQESVDTGEEEEGGDESDLSSESSIKKKFLKRKGKTDSPWIKPARKRRRRSRKKPSGALGSESYKSSAGSAEQTAPGDSTGYMEVSLDSLDLRVKGILSSQAEGLANGPDVLETDGLQEVPLCSCRMETPKSREITTLANNQCMATESVDHELGRCTNSVVKYELMRPSNKAPLLVLCEDHRGRMVKHQCCPGCGYFCTAGNFMECQPESSISHRFHKDCASRVNNASYCPHCGEESSKAKEVTIAKADTTSTVTPVPGQEKGSALEGRADTTTGSAAGPPLSEDDKLQGAASHVPEGFDPTGPAGLGRPTPGLSQGPGKETLESALIALDSEKPKKLRFHPKQLYFSARQGELQKVLLMLVDGIDPNFKMEHQNKRSPLHAAAEAGHVDICHMLVQAGANIDTCSEDQRTPLMEAAENNHLEAVKYLIKAGALVDPKDAEGSTCLHLAAKKGHYEVVQYLLSNGQMDVNCQDDGGWTPMIWATEYKHVDLVKLLLSKGSDINIRDNEENICLHWAAFSGCVDIAEILLAAKCDLHAVNIHGDSPLHIAARENRYDCVVLFLSRDSDVTLKNKEGETPLQCASLNSQVWSALQMSKALQDSAPDRPSPVERIVSRDIARGYERIPIPCVNAVDSEPCPSNYKYVSQNCVTSPMNIDRNITHLQYCVCIDDCSSSNCMCGQLSMRCWYDKDGRLLPEFNMAEPPLIFECNHACSCWRNCRNRVVQNGLRARLQLYRTRDMGWGVRSLQDIPPGTFVCEYVGELISDSEADVREEDSYLFDLDNKDGEVYCIDARFYGNVSRFINHHCEPNLVPVRVFMAHQDLRFPRIAFFSTRLIEAGEQLGFDYGERFWDIKGKLFSCRCGSPKCRHSSAALAQRQASAAQEAQEDGLPDTSSAAAADPL</sequence>
<evidence type="ECO:0000250" key="1"/>
<evidence type="ECO:0000250" key="2">
    <source>
        <dbReference type="UniProtKB" id="Q5DW34"/>
    </source>
</evidence>
<evidence type="ECO:0000255" key="3">
    <source>
        <dbReference type="PROSITE-ProRule" id="PRU00157"/>
    </source>
</evidence>
<evidence type="ECO:0000255" key="4">
    <source>
        <dbReference type="PROSITE-ProRule" id="PRU00190"/>
    </source>
</evidence>
<evidence type="ECO:0000256" key="5">
    <source>
        <dbReference type="SAM" id="MobiDB-lite"/>
    </source>
</evidence>
<evidence type="ECO:0000269" key="6">
    <source>
    </source>
</evidence>
<evidence type="ECO:0000269" key="7">
    <source>
    </source>
</evidence>
<evidence type="ECO:0000269" key="8">
    <source>
    </source>
</evidence>
<evidence type="ECO:0000269" key="9">
    <source>
    </source>
</evidence>
<evidence type="ECO:0000269" key="10">
    <source>
    </source>
</evidence>
<evidence type="ECO:0000269" key="11">
    <source>
    </source>
</evidence>
<evidence type="ECO:0000269" key="12">
    <source>
    </source>
</evidence>
<evidence type="ECO:0000269" key="13">
    <source>
    </source>
</evidence>
<evidence type="ECO:0000269" key="14">
    <source>
    </source>
</evidence>
<evidence type="ECO:0000269" key="15">
    <source>
    </source>
</evidence>
<evidence type="ECO:0000269" key="16">
    <source>
    </source>
</evidence>
<evidence type="ECO:0000269" key="17">
    <source>
    </source>
</evidence>
<evidence type="ECO:0000269" key="18">
    <source>
    </source>
</evidence>
<evidence type="ECO:0000269" key="19">
    <source>
    </source>
</evidence>
<evidence type="ECO:0000303" key="20">
    <source>
    </source>
</evidence>
<evidence type="ECO:0000303" key="21">
    <source>
    </source>
</evidence>
<evidence type="ECO:0000303" key="22">
    <source>
    </source>
</evidence>
<evidence type="ECO:0000305" key="23"/>
<evidence type="ECO:0007744" key="24">
    <source>
    </source>
</evidence>
<evidence type="ECO:0007744" key="25">
    <source>
    </source>
</evidence>
<evidence type="ECO:0007744" key="26">
    <source>
    </source>
</evidence>
<evidence type="ECO:0007744" key="27">
    <source>
    </source>
</evidence>
<evidence type="ECO:0007744" key="28">
    <source>
    </source>
</evidence>
<evidence type="ECO:0007744" key="29">
    <source>
    </source>
</evidence>
<evidence type="ECO:0007744" key="30">
    <source>
    </source>
</evidence>
<evidence type="ECO:0007829" key="31">
    <source>
        <dbReference type="PDB" id="3HNA"/>
    </source>
</evidence>
<evidence type="ECO:0007829" key="32">
    <source>
        <dbReference type="PDB" id="5TTG"/>
    </source>
</evidence>
<evidence type="ECO:0007829" key="33">
    <source>
        <dbReference type="PDB" id="6BY9"/>
    </source>
</evidence>
<organism>
    <name type="scientific">Homo sapiens</name>
    <name type="common">Human</name>
    <dbReference type="NCBI Taxonomy" id="9606"/>
    <lineage>
        <taxon>Eukaryota</taxon>
        <taxon>Metazoa</taxon>
        <taxon>Chordata</taxon>
        <taxon>Craniata</taxon>
        <taxon>Vertebrata</taxon>
        <taxon>Euteleostomi</taxon>
        <taxon>Mammalia</taxon>
        <taxon>Eutheria</taxon>
        <taxon>Euarchontoglires</taxon>
        <taxon>Primates</taxon>
        <taxon>Haplorrhini</taxon>
        <taxon>Catarrhini</taxon>
        <taxon>Hominidae</taxon>
        <taxon>Homo</taxon>
    </lineage>
</organism>
<gene>
    <name type="primary">EHMT1</name>
    <name type="synonym">EUHMTASE1</name>
    <name type="synonym">GLP</name>
    <name type="synonym">KIAA1876</name>
    <name type="synonym">KMT1D</name>
</gene>
<comment type="function">
    <text evidence="2 7 15">Histone methyltransferase that specifically mono- and dimethylates 'Lys-9' of histone H3 (H3K9me1 and H3K9me2, respectively) in euchromatin. H3K9me represents a specific tag for epigenetic transcriptional repression by recruiting HP1 proteins to methylated histones. Also weakly methylates 'Lys-27' of histone H3 (H3K27me). Also required for DNA methylation, the histone methyltransferase activity is not required for DNA methylation, suggesting that these 2 activities function independently. Probably targeted to histone H3 by different DNA-binding proteins like E2F6, MGA, MAX and/or DP1. During G0 phase, it probably contributes to silencing of MYC- and E2F-responsive genes, suggesting a role in G0/G1 transition in cell cycle. In addition to the histone methyltransferase activity, also methylates non-histone proteins: mediates dimethylation of 'Lys-373' of p53/TP53. Represses the expression of mitochondrial function-related genes, perhaps by occupying their promoter regions, working in concert with probable chromatin reader BAZ2B (By similarity).</text>
</comment>
<comment type="catalytic activity">
    <reaction evidence="7">
        <text>N(6)-methyl-L-lysyl(9)-[histone H3] + S-adenosyl-L-methionine = N(6),N(6)-dimethyl-L-lysyl(9)-[histone H3] + S-adenosyl-L-homocysteine + H(+)</text>
        <dbReference type="Rhea" id="RHEA:60284"/>
        <dbReference type="Rhea" id="RHEA-COMP:15541"/>
        <dbReference type="Rhea" id="RHEA-COMP:15542"/>
        <dbReference type="ChEBI" id="CHEBI:15378"/>
        <dbReference type="ChEBI" id="CHEBI:57856"/>
        <dbReference type="ChEBI" id="CHEBI:59789"/>
        <dbReference type="ChEBI" id="CHEBI:61929"/>
        <dbReference type="ChEBI" id="CHEBI:61976"/>
    </reaction>
</comment>
<comment type="catalytic activity">
    <reaction evidence="7">
        <text>L-lysyl(9)-[histone H3] + S-adenosyl-L-methionine = N(6)-methyl-L-lysyl(9)-[histone H3] + S-adenosyl-L-homocysteine + H(+)</text>
        <dbReference type="Rhea" id="RHEA:60280"/>
        <dbReference type="Rhea" id="RHEA-COMP:15542"/>
        <dbReference type="Rhea" id="RHEA-COMP:15546"/>
        <dbReference type="ChEBI" id="CHEBI:15378"/>
        <dbReference type="ChEBI" id="CHEBI:29969"/>
        <dbReference type="ChEBI" id="CHEBI:57856"/>
        <dbReference type="ChEBI" id="CHEBI:59789"/>
        <dbReference type="ChEBI" id="CHEBI:61929"/>
        <dbReference type="EC" id="2.1.1.367"/>
    </reaction>
</comment>
<comment type="activity regulation">
    <text evidence="16">Methyltransferase activity is inhibited by BIX-01294. Efficiently inhibited by compound E72, a BIX-01294 derivative in which the diazepane ring and the benzyl are replaced with a 3-dimethylaminopropyl and a 5-aminopentyl group at sites B and C, respectively.</text>
</comment>
<comment type="subunit">
    <text evidence="2 7 8 11 12 14 15 16 17 18">Heterodimer; heterodimerizes with EHMT2. Interacts with WIZ and EHMT2. Part of the E2F6.com-1 complex in G0 phase composed of E2F6, MGA, MAX, TFDP1, CBX3, BAT8, EHMT1, RING1, RNF2, MBLR, L3MBTL2 and YAF2. Interacts (via ANK repeats) with RELA (when monomethylated at 'Lys-310') (PubMed:21515635). Interacts with MPHOSPH8. Interacts with CDYL. Interacts with REST only in the presence of CDYL. Part of a complex containing at least CDYL, REST, WIZ, SETB1, EHMT1 and EHMT2. Interacts with BAZ2B (By similarity).</text>
</comment>
<comment type="interaction">
    <interactant intactId="EBI-766087">
        <id>Q9H9B1</id>
    </interactant>
    <interactant intactId="EBI-2653928">
        <id>Q99549</id>
        <label>MPHOSPH8</label>
    </interactant>
    <organismsDiffer>false</organismsDiffer>
    <experiments>3</experiments>
</comment>
<comment type="interaction">
    <interactant intactId="EBI-766087">
        <id>Q9H9B1</id>
    </interactant>
    <interactant intactId="EBI-73886">
        <id>Q04206</id>
        <label>RELA</label>
    </interactant>
    <organismsDiffer>false</organismsDiffer>
    <experiments>3</experiments>
</comment>
<comment type="interaction">
    <interactant intactId="EBI-766087">
        <id>Q9H9B1</id>
    </interactant>
    <interactant intactId="EBI-644400">
        <id>Q04207</id>
        <label>Rela</label>
    </interactant>
    <organismsDiffer>true</organismsDiffer>
    <experiments>5</experiments>
</comment>
<comment type="subcellular location">
    <subcellularLocation>
        <location>Nucleus</location>
    </subcellularLocation>
    <subcellularLocation>
        <location>Chromosome</location>
    </subcellularLocation>
    <text>Associates with euchromatic regions.</text>
</comment>
<comment type="alternative products">
    <event type="alternative splicing"/>
    <isoform>
        <id>Q9H9B1-1</id>
        <name>1</name>
        <sequence type="displayed"/>
    </isoform>
    <isoform>
        <id>Q9H9B1-2</id>
        <name>2</name>
        <sequence type="described" ref="VSP_002222 VSP_002223"/>
    </isoform>
    <isoform>
        <id>Q9H9B1-3</id>
        <name>3</name>
        <sequence type="described" ref="VSP_002224 VSP_002225"/>
    </isoform>
    <isoform>
        <id>Q9H9B1-4</id>
        <name>4</name>
        <sequence type="described" ref="VSP_040717 VSP_040718"/>
    </isoform>
    <text>Experimental confirmation may be lacking for some isoforms.</text>
</comment>
<comment type="tissue specificity">
    <text evidence="6">Widely expressed.</text>
</comment>
<comment type="domain">
    <text evidence="1 11">The ANK repeats recognize and bind RELA subunit of NF-kappa-B, when RELA is monomethylated at 'Lys-310' (By similarity). They also specifically recognize and bind H3K9me1 and H3K9me2.</text>
</comment>
<comment type="domain">
    <text evidence="11">The SET domain mediates interaction with WIZ.</text>
</comment>
<comment type="domain">
    <text evidence="11">In the pre-SET domain, Cys residues bind 3 zinc ions that are arranged in a triangular cluster; some of these Cys residues contribute to the binding of two zinc ions within the cluster.</text>
</comment>
<comment type="disease" evidence="9 13">
    <disease id="DI-01348">
        <name>Kleefstra syndrome 1</name>
        <acronym>KLEFS1</acronym>
        <description>A form of Kleefstra syndrome, an autosomal dominant disease characterized by variable intellectual disability, psychomotor developmental delay, seizures, behavioral abnormalities, and facial dysmorphisms. KLEFS1 patients additionally manifest brachy(micro)cephaly, congenital heart defects, and urogenital defects.</description>
        <dbReference type="MIM" id="610253"/>
    </disease>
    <text evidence="9 13">The disease is caused by variants affecting the gene represented in this entry. The syndrome can be either caused by intragenic EHMT1 mutations leading to haploinsufficiency of the EHMT1 gene or by a submicroscopic 9q34.3 deletion. Although it is not known if and to what extent other genes in the 9q34.3 region contribute to the syndrome observed in deletion cases, EHMT1 seems to be the major determinant of the core disease phenotype (PubMed:19264732).</text>
</comment>
<comment type="miscellaneous">
    <molecule>Isoform 2</molecule>
    <text evidence="23">May be produced at very low levels due to a premature stop codon in the mRNA, leading to nonsense-mediated mRNA decay.</text>
</comment>
<comment type="similarity">
    <text evidence="4">Belongs to the class V-like SAM-binding methyltransferase superfamily.</text>
</comment>
<comment type="sequence caution" evidence="23">
    <conflict type="erroneous translation">
        <sequence resource="EMBL-CDS" id="BAB14321"/>
    </conflict>
    <text>Wrong choice of CDS.</text>
</comment>
<comment type="sequence caution" evidence="23">
    <conflict type="miscellaneous discrepancy">
        <sequence resource="EMBL-CDS" id="CAD28534"/>
    </conflict>
    <text>Intron retention.</text>
</comment>
<name>EHMT1_HUMAN</name>
<keyword id="KW-0002">3D-structure</keyword>
<keyword id="KW-0007">Acetylation</keyword>
<keyword id="KW-0025">Alternative splicing</keyword>
<keyword id="KW-0040">ANK repeat</keyword>
<keyword id="KW-0156">Chromatin regulator</keyword>
<keyword id="KW-0158">Chromosome</keyword>
<keyword id="KW-0225">Disease variant</keyword>
<keyword id="KW-0991">Intellectual disability</keyword>
<keyword id="KW-1017">Isopeptide bond</keyword>
<keyword id="KW-0479">Metal-binding</keyword>
<keyword id="KW-0489">Methyltransferase</keyword>
<keyword id="KW-0539">Nucleus</keyword>
<keyword id="KW-0597">Phosphoprotein</keyword>
<keyword id="KW-1267">Proteomics identification</keyword>
<keyword id="KW-1185">Reference proteome</keyword>
<keyword id="KW-0677">Repeat</keyword>
<keyword id="KW-0949">S-adenosyl-L-methionine</keyword>
<keyword id="KW-0808">Transferase</keyword>
<keyword id="KW-0832">Ubl conjugation</keyword>
<keyword id="KW-0862">Zinc</keyword>
<reference key="1">
    <citation type="journal article" date="2004" name="Nat. Genet.">
        <title>Complete sequencing and characterization of 21,243 full-length human cDNAs.</title>
        <authorList>
            <person name="Ota T."/>
            <person name="Suzuki Y."/>
            <person name="Nishikawa T."/>
            <person name="Otsuki T."/>
            <person name="Sugiyama T."/>
            <person name="Irie R."/>
            <person name="Wakamatsu A."/>
            <person name="Hayashi K."/>
            <person name="Sato H."/>
            <person name="Nagai K."/>
            <person name="Kimura K."/>
            <person name="Makita H."/>
            <person name="Sekine M."/>
            <person name="Obayashi M."/>
            <person name="Nishi T."/>
            <person name="Shibahara T."/>
            <person name="Tanaka T."/>
            <person name="Ishii S."/>
            <person name="Yamamoto J."/>
            <person name="Saito K."/>
            <person name="Kawai Y."/>
            <person name="Isono Y."/>
            <person name="Nakamura Y."/>
            <person name="Nagahari K."/>
            <person name="Murakami K."/>
            <person name="Yasuda T."/>
            <person name="Iwayanagi T."/>
            <person name="Wagatsuma M."/>
            <person name="Shiratori A."/>
            <person name="Sudo H."/>
            <person name="Hosoiri T."/>
            <person name="Kaku Y."/>
            <person name="Kodaira H."/>
            <person name="Kondo H."/>
            <person name="Sugawara M."/>
            <person name="Takahashi M."/>
            <person name="Kanda K."/>
            <person name="Yokoi T."/>
            <person name="Furuya T."/>
            <person name="Kikkawa E."/>
            <person name="Omura Y."/>
            <person name="Abe K."/>
            <person name="Kamihara K."/>
            <person name="Katsuta N."/>
            <person name="Sato K."/>
            <person name="Tanikawa M."/>
            <person name="Yamazaki M."/>
            <person name="Ninomiya K."/>
            <person name="Ishibashi T."/>
            <person name="Yamashita H."/>
            <person name="Murakawa K."/>
            <person name="Fujimori K."/>
            <person name="Tanai H."/>
            <person name="Kimata M."/>
            <person name="Watanabe M."/>
            <person name="Hiraoka S."/>
            <person name="Chiba Y."/>
            <person name="Ishida S."/>
            <person name="Ono Y."/>
            <person name="Takiguchi S."/>
            <person name="Watanabe S."/>
            <person name="Yosida M."/>
            <person name="Hotuta T."/>
            <person name="Kusano J."/>
            <person name="Kanehori K."/>
            <person name="Takahashi-Fujii A."/>
            <person name="Hara H."/>
            <person name="Tanase T.-O."/>
            <person name="Nomura Y."/>
            <person name="Togiya S."/>
            <person name="Komai F."/>
            <person name="Hara R."/>
            <person name="Takeuchi K."/>
            <person name="Arita M."/>
            <person name="Imose N."/>
            <person name="Musashino K."/>
            <person name="Yuuki H."/>
            <person name="Oshima A."/>
            <person name="Sasaki N."/>
            <person name="Aotsuka S."/>
            <person name="Yoshikawa Y."/>
            <person name="Matsunawa H."/>
            <person name="Ichihara T."/>
            <person name="Shiohata N."/>
            <person name="Sano S."/>
            <person name="Moriya S."/>
            <person name="Momiyama H."/>
            <person name="Satoh N."/>
            <person name="Takami S."/>
            <person name="Terashima Y."/>
            <person name="Suzuki O."/>
            <person name="Nakagawa S."/>
            <person name="Senoh A."/>
            <person name="Mizoguchi H."/>
            <person name="Goto Y."/>
            <person name="Shimizu F."/>
            <person name="Wakebe H."/>
            <person name="Hishigaki H."/>
            <person name="Watanabe T."/>
            <person name="Sugiyama A."/>
            <person name="Takemoto M."/>
            <person name="Kawakami B."/>
            <person name="Yamazaki M."/>
            <person name="Watanabe K."/>
            <person name="Kumagai A."/>
            <person name="Itakura S."/>
            <person name="Fukuzumi Y."/>
            <person name="Fujimori Y."/>
            <person name="Komiyama M."/>
            <person name="Tashiro H."/>
            <person name="Tanigami A."/>
            <person name="Fujiwara T."/>
            <person name="Ono T."/>
            <person name="Yamada K."/>
            <person name="Fujii Y."/>
            <person name="Ozaki K."/>
            <person name="Hirao M."/>
            <person name="Ohmori Y."/>
            <person name="Kawabata A."/>
            <person name="Hikiji T."/>
            <person name="Kobatake N."/>
            <person name="Inagaki H."/>
            <person name="Ikema Y."/>
            <person name="Okamoto S."/>
            <person name="Okitani R."/>
            <person name="Kawakami T."/>
            <person name="Noguchi S."/>
            <person name="Itoh T."/>
            <person name="Shigeta K."/>
            <person name="Senba T."/>
            <person name="Matsumura K."/>
            <person name="Nakajima Y."/>
            <person name="Mizuno T."/>
            <person name="Morinaga M."/>
            <person name="Sasaki M."/>
            <person name="Togashi T."/>
            <person name="Oyama M."/>
            <person name="Hata H."/>
            <person name="Watanabe M."/>
            <person name="Komatsu T."/>
            <person name="Mizushima-Sugano J."/>
            <person name="Satoh T."/>
            <person name="Shirai Y."/>
            <person name="Takahashi Y."/>
            <person name="Nakagawa K."/>
            <person name="Okumura K."/>
            <person name="Nagase T."/>
            <person name="Nomura N."/>
            <person name="Kikuchi H."/>
            <person name="Masuho Y."/>
            <person name="Yamashita R."/>
            <person name="Nakai K."/>
            <person name="Yada T."/>
            <person name="Nakamura Y."/>
            <person name="Ohara O."/>
            <person name="Isogai T."/>
            <person name="Sugano S."/>
        </authorList>
    </citation>
    <scope>NUCLEOTIDE SEQUENCE [LARGE SCALE MRNA] (ISOFORM 2)</scope>
    <source>
        <tissue>Teratocarcinoma</tissue>
    </source>
</reference>
<reference key="2">
    <citation type="journal article" date="2004" name="Nature">
        <title>DNA sequence and analysis of human chromosome 9.</title>
        <authorList>
            <person name="Humphray S.J."/>
            <person name="Oliver K."/>
            <person name="Hunt A.R."/>
            <person name="Plumb R.W."/>
            <person name="Loveland J.E."/>
            <person name="Howe K.L."/>
            <person name="Andrews T.D."/>
            <person name="Searle S."/>
            <person name="Hunt S.E."/>
            <person name="Scott C.E."/>
            <person name="Jones M.C."/>
            <person name="Ainscough R."/>
            <person name="Almeida J.P."/>
            <person name="Ambrose K.D."/>
            <person name="Ashwell R.I.S."/>
            <person name="Babbage A.K."/>
            <person name="Babbage S."/>
            <person name="Bagguley C.L."/>
            <person name="Bailey J."/>
            <person name="Banerjee R."/>
            <person name="Barker D.J."/>
            <person name="Barlow K.F."/>
            <person name="Bates K."/>
            <person name="Beasley H."/>
            <person name="Beasley O."/>
            <person name="Bird C.P."/>
            <person name="Bray-Allen S."/>
            <person name="Brown A.J."/>
            <person name="Brown J.Y."/>
            <person name="Burford D."/>
            <person name="Burrill W."/>
            <person name="Burton J."/>
            <person name="Carder C."/>
            <person name="Carter N.P."/>
            <person name="Chapman J.C."/>
            <person name="Chen Y."/>
            <person name="Clarke G."/>
            <person name="Clark S.Y."/>
            <person name="Clee C.M."/>
            <person name="Clegg S."/>
            <person name="Collier R.E."/>
            <person name="Corby N."/>
            <person name="Crosier M."/>
            <person name="Cummings A.T."/>
            <person name="Davies J."/>
            <person name="Dhami P."/>
            <person name="Dunn M."/>
            <person name="Dutta I."/>
            <person name="Dyer L.W."/>
            <person name="Earthrowl M.E."/>
            <person name="Faulkner L."/>
            <person name="Fleming C.J."/>
            <person name="Frankish A."/>
            <person name="Frankland J.A."/>
            <person name="French L."/>
            <person name="Fricker D.G."/>
            <person name="Garner P."/>
            <person name="Garnett J."/>
            <person name="Ghori J."/>
            <person name="Gilbert J.G.R."/>
            <person name="Glison C."/>
            <person name="Grafham D.V."/>
            <person name="Gribble S."/>
            <person name="Griffiths C."/>
            <person name="Griffiths-Jones S."/>
            <person name="Grocock R."/>
            <person name="Guy J."/>
            <person name="Hall R.E."/>
            <person name="Hammond S."/>
            <person name="Harley J.L."/>
            <person name="Harrison E.S.I."/>
            <person name="Hart E.A."/>
            <person name="Heath P.D."/>
            <person name="Henderson C.D."/>
            <person name="Hopkins B.L."/>
            <person name="Howard P.J."/>
            <person name="Howden P.J."/>
            <person name="Huckle E."/>
            <person name="Johnson C."/>
            <person name="Johnson D."/>
            <person name="Joy A.A."/>
            <person name="Kay M."/>
            <person name="Keenan S."/>
            <person name="Kershaw J.K."/>
            <person name="Kimberley A.M."/>
            <person name="King A."/>
            <person name="Knights A."/>
            <person name="Laird G.K."/>
            <person name="Langford C."/>
            <person name="Lawlor S."/>
            <person name="Leongamornlert D.A."/>
            <person name="Leversha M."/>
            <person name="Lloyd C."/>
            <person name="Lloyd D.M."/>
            <person name="Lovell J."/>
            <person name="Martin S."/>
            <person name="Mashreghi-Mohammadi M."/>
            <person name="Matthews L."/>
            <person name="McLaren S."/>
            <person name="McLay K.E."/>
            <person name="McMurray A."/>
            <person name="Milne S."/>
            <person name="Nickerson T."/>
            <person name="Nisbett J."/>
            <person name="Nordsiek G."/>
            <person name="Pearce A.V."/>
            <person name="Peck A.I."/>
            <person name="Porter K.M."/>
            <person name="Pandian R."/>
            <person name="Pelan S."/>
            <person name="Phillimore B."/>
            <person name="Povey S."/>
            <person name="Ramsey Y."/>
            <person name="Rand V."/>
            <person name="Scharfe M."/>
            <person name="Sehra H.K."/>
            <person name="Shownkeen R."/>
            <person name="Sims S.K."/>
            <person name="Skuce C.D."/>
            <person name="Smith M."/>
            <person name="Steward C.A."/>
            <person name="Swarbreck D."/>
            <person name="Sycamore N."/>
            <person name="Tester J."/>
            <person name="Thorpe A."/>
            <person name="Tracey A."/>
            <person name="Tromans A."/>
            <person name="Thomas D.W."/>
            <person name="Wall M."/>
            <person name="Wallis J.M."/>
            <person name="West A.P."/>
            <person name="Whitehead S.L."/>
            <person name="Willey D.L."/>
            <person name="Williams S.A."/>
            <person name="Wilming L."/>
            <person name="Wray P.W."/>
            <person name="Young L."/>
            <person name="Ashurst J.L."/>
            <person name="Coulson A."/>
            <person name="Blocker H."/>
            <person name="Durbin R.M."/>
            <person name="Sulston J.E."/>
            <person name="Hubbard T."/>
            <person name="Jackson M.J."/>
            <person name="Bentley D.R."/>
            <person name="Beck S."/>
            <person name="Rogers J."/>
            <person name="Dunham I."/>
        </authorList>
    </citation>
    <scope>NUCLEOTIDE SEQUENCE [LARGE SCALE GENOMIC DNA]</scope>
</reference>
<reference key="3">
    <citation type="journal article" date="2004" name="Genome Res.">
        <title>The status, quality, and expansion of the NIH full-length cDNA project: the Mammalian Gene Collection (MGC).</title>
        <authorList>
            <consortium name="The MGC Project Team"/>
        </authorList>
    </citation>
    <scope>NUCLEOTIDE SEQUENCE [LARGE SCALE MRNA] (ISOFORM 4)</scope>
    <scope>NUCLEOTIDE SEQUENCE [LARGE SCALE MRNA] OF 583-1298 (ISOFORM 1)</scope>
    <source>
        <tissue>Brain</tissue>
        <tissue>Testis</tissue>
    </source>
</reference>
<reference key="4">
    <citation type="journal article" date="2002" name="Science">
        <title>A complex with chromatin modifiers that occupies E2F- and Myc-responsive genes in G0 cells.</title>
        <authorList>
            <person name="Ogawa H."/>
            <person name="Ishiguro K."/>
            <person name="Gaubatz S."/>
            <person name="Livingston D.M."/>
            <person name="Nakatani Y."/>
        </authorList>
    </citation>
    <scope>NUCLEOTIDE SEQUENCE [MRNA] OF 32-1298 (ISOFORM 1)</scope>
    <scope>FUNCTION</scope>
    <scope>CATALYTIC ACTIVITY</scope>
    <scope>IDENTIFICATION IN COMPLEX WITH E2F6; TFDP1; MAX; MGA; BAT8; CBX3; RING1; RNF2; MBLR; L3MBTL2 AND YAF2</scope>
    <source>
        <tissue>Cervix carcinoma</tissue>
    </source>
</reference>
<reference key="5">
    <citation type="submission" date="1999-06" db="EMBL/GenBank/DDBJ databases">
        <authorList>
            <person name="Tsuritani K."/>
            <person name="Ukai Y."/>
            <person name="Yajima Y."/>
            <person name="Amemiya C."/>
            <person name="Yoshimoto M."/>
        </authorList>
    </citation>
    <scope>NUCLEOTIDE SEQUENCE [MRNA] OF 382-1298 (ISOFORM 1)</scope>
    <source>
        <tissue>Brain</tissue>
    </source>
</reference>
<reference key="6">
    <citation type="journal article" date="2001" name="DNA Res.">
        <title>Prediction of the coding sequences of unidentified human genes. XX. The complete sequences of 100 new cDNA clones from brain which code for large proteins in vitro.</title>
        <authorList>
            <person name="Nagase T."/>
            <person name="Nakayama M."/>
            <person name="Nakajima D."/>
            <person name="Kikuno R."/>
            <person name="Ohara O."/>
        </authorList>
    </citation>
    <scope>NUCLEOTIDE SEQUENCE [LARGE SCALE MRNA] OF 382-1298 (ISOFORM 3)</scope>
    <scope>TISSUE SPECIFICITY</scope>
    <source>
        <tissue>Brain</tissue>
    </source>
</reference>
<reference key="7">
    <citation type="journal article" date="2002" name="DNA Res.">
        <title>Construction of expression-ready cDNA clones for KIAA genes: manual curation of 330 KIAA cDNA clones.</title>
        <authorList>
            <person name="Nakajima D."/>
            <person name="Okazaki N."/>
            <person name="Yamakawa H."/>
            <person name="Kikuno R."/>
            <person name="Ohara O."/>
            <person name="Nagase T."/>
        </authorList>
    </citation>
    <scope>SEQUENCE REVISION</scope>
</reference>
<reference key="8">
    <citation type="journal article" date="2007" name="BMC Genomics">
        <title>The full-ORF clone resource of the German cDNA consortium.</title>
        <authorList>
            <person name="Bechtel S."/>
            <person name="Rosenfelder H."/>
            <person name="Duda A."/>
            <person name="Schmidt C.P."/>
            <person name="Ernst U."/>
            <person name="Wellenreuther R."/>
            <person name="Mehrle A."/>
            <person name="Schuster C."/>
            <person name="Bahr A."/>
            <person name="Bloecker H."/>
            <person name="Heubner D."/>
            <person name="Hoerlein A."/>
            <person name="Michel G."/>
            <person name="Wedler H."/>
            <person name="Koehrer K."/>
            <person name="Ottenwaelder B."/>
            <person name="Poustka A."/>
            <person name="Wiemann S."/>
            <person name="Schupp I."/>
        </authorList>
    </citation>
    <scope>NUCLEOTIDE SEQUENCE [LARGE SCALE MRNA] OF 1089-1298 (ISOFORM 1)</scope>
    <source>
        <tissue>Lymph node</tissue>
    </source>
</reference>
<reference key="9">
    <citation type="journal article" date="2006" name="Am. J. Hum. Genet.">
        <title>Loss-of-function mutations in euchromatin histone methyl transferase 1 (EHMT1) cause the 9q34 subtelomeric deletion syndrome.</title>
        <authorList>
            <person name="Kleefstra T."/>
            <person name="Brunner H.G."/>
            <person name="Amiel J."/>
            <person name="Oudakker A.R."/>
            <person name="Nillesen W.M."/>
            <person name="Magee A."/>
            <person name="Genevieve D."/>
            <person name="Cormier-Daire V."/>
            <person name="van Esch H."/>
            <person name="Fryns J.-P."/>
            <person name="Hamel B.C.J."/>
            <person name="Sistermans E.A."/>
            <person name="de Vries B.B.A."/>
            <person name="van Bokhoven H."/>
        </authorList>
    </citation>
    <scope>INVOLVEMENT IN KLEFS1</scope>
</reference>
<reference key="10">
    <citation type="journal article" date="2006" name="J. Biol. Chem.">
        <title>Zinc finger protein Wiz links G9a/GLP histone methyltransferases to the co-repressor molecule CtBP.</title>
        <authorList>
            <person name="Ueda J."/>
            <person name="Tachibana M."/>
            <person name="Ikura T."/>
            <person name="Shinkai Y."/>
        </authorList>
    </citation>
    <scope>INTERACTION WITH WIZ AND EHMT2</scope>
</reference>
<reference key="11">
    <citation type="journal article" date="2007" name="Science">
        <title>ATM and ATR substrate analysis reveals extensive protein networks responsive to DNA damage.</title>
        <authorList>
            <person name="Matsuoka S."/>
            <person name="Ballif B.A."/>
            <person name="Smogorzewska A."/>
            <person name="McDonald E.R. III"/>
            <person name="Hurov K.E."/>
            <person name="Luo J."/>
            <person name="Bakalarski C.E."/>
            <person name="Zhao Z."/>
            <person name="Solimini N."/>
            <person name="Lerenthal Y."/>
            <person name="Shiloh Y."/>
            <person name="Gygi S.P."/>
            <person name="Elledge S.J."/>
        </authorList>
    </citation>
    <scope>IDENTIFICATION BY MASS SPECTROMETRY [LARGE SCALE ANALYSIS]</scope>
    <source>
        <tissue>Embryonic kidney</tissue>
    </source>
</reference>
<reference key="12">
    <citation type="journal article" date="2008" name="Mol. Cell">
        <title>CDYL bridges REST and histone methyltransferases for gene repression and suppression of cellular transformation.</title>
        <authorList>
            <person name="Mulligan P."/>
            <person name="Westbrook T.F."/>
            <person name="Ottinger M."/>
            <person name="Pavlova N."/>
            <person name="Chang B."/>
            <person name="Macia E."/>
            <person name="Shi Y.J."/>
            <person name="Barretina J."/>
            <person name="Liu J."/>
            <person name="Howley P.M."/>
            <person name="Elledge S.J."/>
            <person name="Shi Y."/>
        </authorList>
    </citation>
    <scope>INTERACTION WITH CDYL AND REST</scope>
    <scope>IDENTIFICATION IN A COMPLEX WITH REST; CDYL; SETB1; EHMT2 AND WIZ</scope>
</reference>
<reference key="13">
    <citation type="journal article" date="2008" name="Proc. Natl. Acad. Sci. U.S.A.">
        <title>A quantitative atlas of mitotic phosphorylation.</title>
        <authorList>
            <person name="Dephoure N."/>
            <person name="Zhou C."/>
            <person name="Villen J."/>
            <person name="Beausoleil S.A."/>
            <person name="Bakalarski C.E."/>
            <person name="Elledge S.J."/>
            <person name="Gygi S.P."/>
        </authorList>
    </citation>
    <scope>IDENTIFICATION BY MASS SPECTROMETRY [LARGE SCALE ANALYSIS]</scope>
    <source>
        <tissue>Cervix carcinoma</tissue>
    </source>
</reference>
<reference key="14">
    <citation type="journal article" date="2010" name="EMBO J.">
        <title>Methyl-H3K9-binding protein MPP8 mediates E-cadherin gene silencing and promotes tumour cell motility and invasion.</title>
        <authorList>
            <person name="Kokura K."/>
            <person name="Sun L."/>
            <person name="Bedford M.T."/>
            <person name="Fang J."/>
        </authorList>
    </citation>
    <scope>INTERACTION WITH MPHOSPH8</scope>
</reference>
<reference key="15">
    <citation type="journal article" date="2010" name="J. Biol. Chem.">
        <title>G9a and Glp methylate lysine 373 in the tumor suppressor p53.</title>
        <authorList>
            <person name="Huang J."/>
            <person name="Dorsey J."/>
            <person name="Chuikov S."/>
            <person name="Perez-Burgos L."/>
            <person name="Zhang X."/>
            <person name="Jenuwein T."/>
            <person name="Reinberg D."/>
            <person name="Berger S.L."/>
        </authorList>
    </citation>
    <scope>FUNCTION</scope>
    <scope>INTERACTION WITH TP53</scope>
</reference>
<reference key="16">
    <citation type="journal article" date="2010" name="J. Biol. Chem.">
        <authorList>
            <person name="Huang J."/>
            <person name="Dorsey J."/>
            <person name="Chuikov S."/>
            <person name="Perez-Burgos L."/>
            <person name="Zhang X."/>
            <person name="Jenuwein T."/>
            <person name="Reinberg D."/>
            <person name="Berger S.L."/>
        </authorList>
    </citation>
    <scope>ERRATUM OF PUBMED:20118233</scope>
</reference>
<reference key="17">
    <citation type="journal article" date="2011" name="BMC Syst. Biol.">
        <title>Initial characterization of the human central proteome.</title>
        <authorList>
            <person name="Burkard T.R."/>
            <person name="Planyavsky M."/>
            <person name="Kaupe I."/>
            <person name="Breitwieser F.P."/>
            <person name="Buerckstuemmer T."/>
            <person name="Bennett K.L."/>
            <person name="Superti-Furga G."/>
            <person name="Colinge J."/>
        </authorList>
    </citation>
    <scope>IDENTIFICATION BY MASS SPECTROMETRY [LARGE SCALE ANALYSIS]</scope>
</reference>
<reference key="18">
    <citation type="journal article" date="2011" name="Nucleic Acids Res.">
        <title>Structural basis of SETD6-mediated regulation of the NF-kB network via methyl-lysine signaling.</title>
        <authorList>
            <person name="Chang Y."/>
            <person name="Levy D."/>
            <person name="Horton J.R."/>
            <person name="Peng J."/>
            <person name="Zhang X."/>
            <person name="Gozani O."/>
            <person name="Cheng X."/>
        </authorList>
    </citation>
    <scope>INTERACTION WITH RELA</scope>
    <scope>MUTAGENESIS OF TRP-874; GLU-882 AND TRP-912</scope>
</reference>
<reference key="19">
    <citation type="journal article" date="2011" name="Sci. Signal.">
        <title>System-wide temporal characterization of the proteome and phosphoproteome of human embryonic stem cell differentiation.</title>
        <authorList>
            <person name="Rigbolt K.T."/>
            <person name="Prokhorova T.A."/>
            <person name="Akimov V."/>
            <person name="Henningsen J."/>
            <person name="Johansen P.T."/>
            <person name="Kratchmarova I."/>
            <person name="Kassem M."/>
            <person name="Mann M."/>
            <person name="Olsen J.V."/>
            <person name="Blagoev B."/>
        </authorList>
    </citation>
    <scope>IDENTIFICATION BY MASS SPECTROMETRY [LARGE SCALE ANALYSIS]</scope>
</reference>
<reference key="20">
    <citation type="journal article" date="2013" name="J. Proteome Res.">
        <title>Toward a comprehensive characterization of a human cancer cell phosphoproteome.</title>
        <authorList>
            <person name="Zhou H."/>
            <person name="Di Palma S."/>
            <person name="Preisinger C."/>
            <person name="Peng M."/>
            <person name="Polat A.N."/>
            <person name="Heck A.J."/>
            <person name="Mohammed S."/>
        </authorList>
    </citation>
    <scope>PHOSPHORYLATION [LARGE SCALE ANALYSIS] AT SER-435; SER-1004 AND SER-1048</scope>
    <scope>IDENTIFICATION BY MASS SPECTROMETRY [LARGE SCALE ANALYSIS]</scope>
    <source>
        <tissue>Cervix carcinoma</tissue>
        <tissue>Erythroleukemia</tissue>
    </source>
</reference>
<reference key="21">
    <citation type="journal article" date="2014" name="J. Proteomics">
        <title>An enzyme assisted RP-RPLC approach for in-depth analysis of human liver phosphoproteome.</title>
        <authorList>
            <person name="Bian Y."/>
            <person name="Song C."/>
            <person name="Cheng K."/>
            <person name="Dong M."/>
            <person name="Wang F."/>
            <person name="Huang J."/>
            <person name="Sun D."/>
            <person name="Wang L."/>
            <person name="Ye M."/>
            <person name="Zou H."/>
        </authorList>
    </citation>
    <scope>PHOSPHORYLATION [LARGE SCALE ANALYSIS] AT SER-483</scope>
    <scope>IDENTIFICATION BY MASS SPECTROMETRY [LARGE SCALE ANALYSIS]</scope>
    <source>
        <tissue>Liver</tissue>
    </source>
</reference>
<reference key="22">
    <citation type="journal article" date="2014" name="Nat. Struct. Mol. Biol.">
        <title>Uncovering global SUMOylation signaling networks in a site-specific manner.</title>
        <authorList>
            <person name="Hendriks I.A."/>
            <person name="D'Souza R.C."/>
            <person name="Yang B."/>
            <person name="Verlaan-de Vries M."/>
            <person name="Mann M."/>
            <person name="Vertegaal A.C."/>
        </authorList>
    </citation>
    <scope>SUMOYLATION [LARGE SCALE ANALYSIS] AT LYS-432</scope>
    <scope>IDENTIFICATION BY MASS SPECTROMETRY [LARGE SCALE ANALYSIS]</scope>
</reference>
<reference key="23">
    <citation type="journal article" date="2014" name="Proc. Natl. Acad. Sci. U.S.A.">
        <title>Mapping of SUMO sites and analysis of SUMOylation changes induced by external stimuli.</title>
        <authorList>
            <person name="Impens F."/>
            <person name="Radoshevich L."/>
            <person name="Cossart P."/>
            <person name="Ribet D."/>
        </authorList>
    </citation>
    <scope>SUMOYLATION [LARGE SCALE ANALYSIS] AT LYS-22</scope>
    <scope>IDENTIFICATION BY MASS SPECTROMETRY [LARGE SCALE ANALYSIS]</scope>
</reference>
<reference key="24">
    <citation type="journal article" date="2015" name="Cell Rep.">
        <title>SUMO-2 orchestrates chromatin modifiers in response to DNA damage.</title>
        <authorList>
            <person name="Hendriks I.A."/>
            <person name="Treffers L.W."/>
            <person name="Verlaan-de Vries M."/>
            <person name="Olsen J.V."/>
            <person name="Vertegaal A.C."/>
        </authorList>
    </citation>
    <scope>SUMOYLATION [LARGE SCALE ANALYSIS] AT LYS-234</scope>
    <scope>IDENTIFICATION BY MASS SPECTROMETRY [LARGE SCALE ANALYSIS]</scope>
</reference>
<reference key="25">
    <citation type="journal article" date="2015" name="Hum. Mol. Genet.">
        <title>Biochemical and cellular analysis of Ogden syndrome reveals downstream Nt-acetylation defects.</title>
        <authorList>
            <person name="Myklebust L.M."/>
            <person name="Van Damme P."/>
            <person name="Stoeve S.I."/>
            <person name="Doerfel M.J."/>
            <person name="Abboud A."/>
            <person name="Kalvik T.V."/>
            <person name="Grauffel C."/>
            <person name="Jonckheere V."/>
            <person name="Wu Y."/>
            <person name="Swensen J."/>
            <person name="Kaasa H."/>
            <person name="Liszczak G."/>
            <person name="Marmorstein R."/>
            <person name="Reuter N."/>
            <person name="Lyon G.J."/>
            <person name="Gevaert K."/>
            <person name="Arnesen T."/>
        </authorList>
    </citation>
    <scope>ACETYLATION AT ALA-2</scope>
    <scope>CLEAVAGE OF INITIATOR METHIONINE</scope>
</reference>
<reference key="26">
    <citation type="journal article" date="2015" name="Mol. Cell. Proteomics">
        <title>System-wide analysis of SUMOylation dynamics in response to replication stress reveals novel small ubiquitin-like modified target proteins and acceptor lysines relevant for genome stability.</title>
        <authorList>
            <person name="Xiao Z."/>
            <person name="Chang J.G."/>
            <person name="Hendriks I.A."/>
            <person name="Sigurdsson J.O."/>
            <person name="Olsen J.V."/>
            <person name="Vertegaal A.C."/>
        </authorList>
    </citation>
    <scope>SUMOYLATION [LARGE SCALE ANALYSIS] AT LYS-234 AND LYS-731</scope>
    <scope>IDENTIFICATION BY MASS SPECTROMETRY [LARGE SCALE ANALYSIS]</scope>
</reference>
<reference key="27">
    <citation type="journal article" date="2017" name="Nat. Struct. Mol. Biol.">
        <title>Site-specific mapping of the human SUMO proteome reveals co-modification with phosphorylation.</title>
        <authorList>
            <person name="Hendriks I.A."/>
            <person name="Lyon D."/>
            <person name="Young C."/>
            <person name="Jensen L.J."/>
            <person name="Vertegaal A.C."/>
            <person name="Nielsen M.L."/>
        </authorList>
    </citation>
    <scope>SUMOYLATION [LARGE SCALE ANALYSIS] AT LYS-22; LYS-190; LYS-199; LYS-231; LYS-234; LYS-317; LYS-327; LYS-432; LYS-492; LYS-559; LYS-644; LYS-659; LYS-684 AND LYS-731</scope>
    <scope>IDENTIFICATION BY MASS SPECTROMETRY [LARGE SCALE ANALYSIS]</scope>
</reference>
<reference key="28">
    <citation type="journal article" date="2008" name="Nat. Struct. Mol. Biol.">
        <title>The ankyrin repeats of G9a and GLP histone methyltransferases are mono- and dimethyllysine binding modules.</title>
        <authorList>
            <person name="Collins R.E."/>
            <person name="Northrop J.P."/>
            <person name="Horton J.R."/>
            <person name="Lee D.Y."/>
            <person name="Zhang X."/>
            <person name="Stallcup M.R."/>
            <person name="Cheng X."/>
        </authorList>
    </citation>
    <scope>X-RAY CRYSTALLOGRAPHY (2.99 ANGSTROMS) OF 765-999 IN COMPLEX WITH HISTONE H3</scope>
    <scope>DOMAIN ANK REPEATS</scope>
    <scope>MUTAGENESIS OF GLU-905</scope>
</reference>
<reference key="29">
    <citation type="journal article" date="2010" name="J. Mol. Biol.">
        <title>Adding a lysine mimic in the design of potent inhibitors of histone lysine methyltransferases.</title>
        <authorList>
            <person name="Chang Y."/>
            <person name="Ganesh T."/>
            <person name="Horton J.R."/>
            <person name="Spannhoff A."/>
            <person name="Liu J."/>
            <person name="Sun A."/>
            <person name="Zhang X."/>
            <person name="Bedford M.T."/>
            <person name="Shinkai Y."/>
            <person name="Snyder J.P."/>
            <person name="Cheng X."/>
        </authorList>
    </citation>
    <scope>X-RAY CRYSTALLOGRAPHY (2.14 ANGSTROMS) OF 982-1266 IN COMPLEX WITH S-ADENOSYL-L-HOMOCYSTEINE; ZINC ION AND E72 INHIBITOR</scope>
    <scope>ACTIVITY REGULATION</scope>
</reference>
<reference key="30">
    <citation type="journal article" date="2010" name="PLoS ONE">
        <title>Structural biology of human H3K9 methyltransferases.</title>
        <authorList>
            <person name="Wu H."/>
            <person name="Min J."/>
            <person name="Lunin V.V."/>
            <person name="Antoshenko T."/>
            <person name="Dombrovski L."/>
            <person name="Zeng H."/>
            <person name="Allali-Hassani A."/>
            <person name="Campagna-Slater V."/>
            <person name="Vedadi M."/>
            <person name="Arrowsmith C.H."/>
            <person name="Plotnikov A.N."/>
            <person name="Schapira M."/>
        </authorList>
    </citation>
    <scope>X-RAY CRYSTALLOGRAPHY (1.5 ANGSTROMS) OF 982-1266 IN COMPLEX WITH HISTONE H3; S-ADENOSYL-L-HOMOCYSTEINE AND ZINC IONS</scope>
</reference>
<reference key="31">
    <citation type="journal article" date="2006" name="Science">
        <title>The consensus coding sequences of human breast and colorectal cancers.</title>
        <authorList>
            <person name="Sjoeblom T."/>
            <person name="Jones S."/>
            <person name="Wood L.D."/>
            <person name="Parsons D.W."/>
            <person name="Lin J."/>
            <person name="Barber T.D."/>
            <person name="Mandelker D."/>
            <person name="Leary R.J."/>
            <person name="Ptak J."/>
            <person name="Silliman N."/>
            <person name="Szabo S."/>
            <person name="Buckhaults P."/>
            <person name="Farrell C."/>
            <person name="Meeh P."/>
            <person name="Markowitz S.D."/>
            <person name="Willis J."/>
            <person name="Dawson D."/>
            <person name="Willson J.K.V."/>
            <person name="Gazdar A.F."/>
            <person name="Hartigan J."/>
            <person name="Wu L."/>
            <person name="Liu C."/>
            <person name="Parmigiani G."/>
            <person name="Park B.H."/>
            <person name="Bachman K.E."/>
            <person name="Papadopoulos N."/>
            <person name="Vogelstein B."/>
            <person name="Kinzler K.W."/>
            <person name="Velculescu V.E."/>
        </authorList>
    </citation>
    <scope>VARIANTS [LARGE SCALE ANALYSIS] VAL-43 AND PHE-1173</scope>
</reference>
<reference key="32">
    <citation type="journal article" date="2009" name="J. Med. Genet.">
        <title>Further clinical and molecular delineation of the 9q subtelomeric deletion syndrome supports a major contribution of EHMT1 haploinsufficiency to the core phenotype.</title>
        <authorList>
            <person name="Kleefstra T."/>
            <person name="van Zelst-Stams W.A."/>
            <person name="Nillesen W.M."/>
            <person name="Cormier-Daire V."/>
            <person name="Houge G."/>
            <person name="Foulds N."/>
            <person name="van Dooren M."/>
            <person name="Willemsen M.H."/>
            <person name="Pfundt R."/>
            <person name="Turner A."/>
            <person name="Wilson M."/>
            <person name="McGaughran J."/>
            <person name="Rauch A."/>
            <person name="Zenker M."/>
            <person name="Adam M.P."/>
            <person name="Innes M."/>
            <person name="Davies C."/>
            <person name="Lopez A.G."/>
            <person name="Casalone R."/>
            <person name="Weber A."/>
            <person name="Brueton L.A."/>
            <person name="Navarro A.D."/>
            <person name="Bralo M.P."/>
            <person name="Venselaar H."/>
            <person name="Stegmann S.P."/>
            <person name="Yntema H.G."/>
            <person name="van Bokhoven H."/>
            <person name="Brunner H.G."/>
        </authorList>
    </citation>
    <scope>VARIANT KLEFS1 TYR-1075</scope>
</reference>
<feature type="initiator methionine" description="Removed" evidence="19">
    <location>
        <position position="1"/>
    </location>
</feature>
<feature type="chain" id="PRO_0000186067" description="Histone-lysine N-methyltransferase EHMT1">
    <location>
        <begin position="2"/>
        <end position="1298"/>
    </location>
</feature>
<feature type="repeat" description="ANK 1">
    <location>
        <begin position="737"/>
        <end position="766"/>
    </location>
</feature>
<feature type="repeat" description="ANK 2">
    <location>
        <begin position="772"/>
        <end position="801"/>
    </location>
</feature>
<feature type="repeat" description="ANK 3">
    <location>
        <begin position="805"/>
        <end position="834"/>
    </location>
</feature>
<feature type="repeat" description="ANK 4">
    <location>
        <begin position="838"/>
        <end position="868"/>
    </location>
</feature>
<feature type="repeat" description="ANK 5">
    <location>
        <begin position="872"/>
        <end position="901"/>
    </location>
</feature>
<feature type="repeat" description="ANK 6">
    <location>
        <begin position="905"/>
        <end position="934"/>
    </location>
</feature>
<feature type="repeat" description="ANK 7">
    <location>
        <begin position="938"/>
        <end position="967"/>
    </location>
</feature>
<feature type="repeat" description="ANK 8">
    <location>
        <begin position="971"/>
        <end position="1004"/>
    </location>
</feature>
<feature type="domain" description="Pre-SET" evidence="3">
    <location>
        <begin position="1060"/>
        <end position="1123"/>
    </location>
</feature>
<feature type="domain" description="SET" evidence="4">
    <location>
        <begin position="1126"/>
        <end position="1243"/>
    </location>
</feature>
<feature type="region of interest" description="Disordered" evidence="5">
    <location>
        <begin position="1"/>
        <end position="111"/>
    </location>
</feature>
<feature type="region of interest" description="Disordered" evidence="5">
    <location>
        <begin position="144"/>
        <end position="192"/>
    </location>
</feature>
<feature type="region of interest" description="Disordered" evidence="5">
    <location>
        <begin position="211"/>
        <end position="234"/>
    </location>
</feature>
<feature type="region of interest" description="Disordered" evidence="5">
    <location>
        <begin position="339"/>
        <end position="479"/>
    </location>
</feature>
<feature type="region of interest" description="Disordered" evidence="5">
    <location>
        <begin position="644"/>
        <end position="717"/>
    </location>
</feature>
<feature type="region of interest" description="Histone H3K9me binding">
    <location>
        <begin position="905"/>
        <end position="907"/>
    </location>
</feature>
<feature type="region of interest" description="Interaction with histone H3">
    <location>
        <begin position="1162"/>
        <end position="1181"/>
    </location>
</feature>
<feature type="region of interest" description="Interaction with histone H3">
    <location>
        <begin position="1242"/>
        <end position="1245"/>
    </location>
</feature>
<feature type="region of interest" description="Disordered" evidence="5">
    <location>
        <begin position="1274"/>
        <end position="1298"/>
    </location>
</feature>
<feature type="compositionally biased region" description="Basic and acidic residues" evidence="5">
    <location>
        <begin position="38"/>
        <end position="50"/>
    </location>
</feature>
<feature type="compositionally biased region" description="Polar residues" evidence="5">
    <location>
        <begin position="54"/>
        <end position="67"/>
    </location>
</feature>
<feature type="compositionally biased region" description="Polar residues" evidence="5">
    <location>
        <begin position="76"/>
        <end position="89"/>
    </location>
</feature>
<feature type="compositionally biased region" description="Basic and acidic residues" evidence="5">
    <location>
        <begin position="96"/>
        <end position="105"/>
    </location>
</feature>
<feature type="compositionally biased region" description="Basic and acidic residues" evidence="5">
    <location>
        <begin position="217"/>
        <end position="234"/>
    </location>
</feature>
<feature type="compositionally biased region" description="Acidic residues" evidence="5">
    <location>
        <begin position="344"/>
        <end position="360"/>
    </location>
</feature>
<feature type="compositionally biased region" description="Basic and acidic residues" evidence="5">
    <location>
        <begin position="373"/>
        <end position="393"/>
    </location>
</feature>
<feature type="compositionally biased region" description="Acidic residues" evidence="5">
    <location>
        <begin position="394"/>
        <end position="416"/>
    </location>
</feature>
<feature type="compositionally biased region" description="Basic residues" evidence="5">
    <location>
        <begin position="440"/>
        <end position="452"/>
    </location>
</feature>
<feature type="compositionally biased region" description="Polar residues" evidence="5">
    <location>
        <begin position="460"/>
        <end position="474"/>
    </location>
</feature>
<feature type="binding site">
    <location>
        <position position="1062"/>
    </location>
    <ligand>
        <name>Zn(2+)</name>
        <dbReference type="ChEBI" id="CHEBI:29105"/>
        <label>1</label>
    </ligand>
</feature>
<feature type="binding site">
    <location>
        <position position="1062"/>
    </location>
    <ligand>
        <name>Zn(2+)</name>
        <dbReference type="ChEBI" id="CHEBI:29105"/>
        <label>2</label>
    </ligand>
</feature>
<feature type="binding site">
    <location>
        <position position="1064"/>
    </location>
    <ligand>
        <name>Zn(2+)</name>
        <dbReference type="ChEBI" id="CHEBI:29105"/>
        <label>1</label>
    </ligand>
</feature>
<feature type="binding site">
    <location>
        <position position="1068"/>
    </location>
    <ligand>
        <name>Zn(2+)</name>
        <dbReference type="ChEBI" id="CHEBI:29105"/>
        <label>1</label>
    </ligand>
</feature>
<feature type="binding site">
    <location>
        <position position="1068"/>
    </location>
    <ligand>
        <name>Zn(2+)</name>
        <dbReference type="ChEBI" id="CHEBI:29105"/>
        <label>3</label>
    </ligand>
</feature>
<feature type="binding site">
    <location>
        <position position="1073"/>
    </location>
    <ligand>
        <name>Zn(2+)</name>
        <dbReference type="ChEBI" id="CHEBI:29105"/>
        <label>1</label>
    </ligand>
</feature>
<feature type="binding site">
    <location>
        <position position="1075"/>
    </location>
    <ligand>
        <name>Zn(2+)</name>
        <dbReference type="ChEBI" id="CHEBI:29105"/>
        <label>2</label>
    </ligand>
</feature>
<feature type="binding site">
    <location>
        <position position="1105"/>
    </location>
    <ligand>
        <name>Zn(2+)</name>
        <dbReference type="ChEBI" id="CHEBI:29105"/>
        <label>2</label>
    </ligand>
</feature>
<feature type="binding site">
    <location>
        <position position="1105"/>
    </location>
    <ligand>
        <name>Zn(2+)</name>
        <dbReference type="ChEBI" id="CHEBI:29105"/>
        <label>3</label>
    </ligand>
</feature>
<feature type="binding site">
    <location>
        <position position="1109"/>
    </location>
    <ligand>
        <name>Zn(2+)</name>
        <dbReference type="ChEBI" id="CHEBI:29105"/>
        <label>2</label>
    </ligand>
</feature>
<feature type="binding site">
    <location>
        <position position="1111"/>
    </location>
    <ligand>
        <name>Zn(2+)</name>
        <dbReference type="ChEBI" id="CHEBI:29105"/>
        <label>3</label>
    </ligand>
</feature>
<feature type="binding site">
    <location>
        <position position="1115"/>
    </location>
    <ligand>
        <name>Zn(2+)</name>
        <dbReference type="ChEBI" id="CHEBI:29105"/>
        <label>3</label>
    </ligand>
</feature>
<feature type="binding site">
    <location>
        <begin position="1136"/>
        <end position="1138"/>
    </location>
    <ligand>
        <name>S-adenosyl-L-methionine</name>
        <dbReference type="ChEBI" id="CHEBI:59789"/>
    </ligand>
</feature>
<feature type="binding site">
    <location>
        <position position="1173"/>
    </location>
    <ligand>
        <name>S-adenosyl-L-methionine</name>
        <dbReference type="ChEBI" id="CHEBI:59789"/>
    </ligand>
</feature>
<feature type="binding site">
    <location>
        <begin position="1200"/>
        <end position="1201"/>
    </location>
    <ligand>
        <name>S-adenosyl-L-methionine</name>
        <dbReference type="ChEBI" id="CHEBI:59789"/>
    </ligand>
</feature>
<feature type="binding site">
    <location>
        <position position="1203"/>
    </location>
    <ligand>
        <name>Zn(2+)</name>
        <dbReference type="ChEBI" id="CHEBI:29105"/>
        <label>4</label>
    </ligand>
</feature>
<feature type="binding site">
    <location>
        <position position="1256"/>
    </location>
    <ligand>
        <name>Zn(2+)</name>
        <dbReference type="ChEBI" id="CHEBI:29105"/>
        <label>4</label>
    </ligand>
</feature>
<feature type="binding site">
    <location>
        <position position="1257"/>
    </location>
    <ligand>
        <name>S-adenosyl-L-methionine</name>
        <dbReference type="ChEBI" id="CHEBI:59789"/>
    </ligand>
</feature>
<feature type="binding site">
    <location>
        <position position="1258"/>
    </location>
    <ligand>
        <name>Zn(2+)</name>
        <dbReference type="ChEBI" id="CHEBI:29105"/>
        <label>4</label>
    </ligand>
</feature>
<feature type="binding site">
    <location>
        <position position="1263"/>
    </location>
    <ligand>
        <name>Zn(2+)</name>
        <dbReference type="ChEBI" id="CHEBI:29105"/>
        <label>4</label>
    </ligand>
</feature>
<feature type="site" description="Histone H3K9me binding" evidence="11 14">
    <location>
        <position position="1155"/>
    </location>
</feature>
<feature type="modified residue" description="N-acetylalanine" evidence="19">
    <location>
        <position position="2"/>
    </location>
</feature>
<feature type="modified residue" description="Phosphoserine" evidence="24">
    <location>
        <position position="435"/>
    </location>
</feature>
<feature type="modified residue" description="Phosphoserine" evidence="25">
    <location>
        <position position="483"/>
    </location>
</feature>
<feature type="modified residue" description="Phosphoserine" evidence="24">
    <location>
        <position position="1004"/>
    </location>
</feature>
<feature type="modified residue" description="Phosphoserine" evidence="24">
    <location>
        <position position="1048"/>
    </location>
</feature>
<feature type="cross-link" description="Glycyl lysine isopeptide (Lys-Gly) (interchain with G-Cter in SUMO1); alternate" evidence="26">
    <location>
        <position position="22"/>
    </location>
</feature>
<feature type="cross-link" description="Glycyl lysine isopeptide (Lys-Gly) (interchain with G-Cter in SUMO2); alternate" evidence="30">
    <location>
        <position position="22"/>
    </location>
</feature>
<feature type="cross-link" description="Glycyl lysine isopeptide (Lys-Gly) (interchain with G-Cter in SUMO2)" evidence="30">
    <location>
        <position position="190"/>
    </location>
</feature>
<feature type="cross-link" description="Glycyl lysine isopeptide (Lys-Gly) (interchain with G-Cter in SUMO2)" evidence="30">
    <location>
        <position position="199"/>
    </location>
</feature>
<feature type="cross-link" description="Glycyl lysine isopeptide (Lys-Gly) (interchain with G-Cter in SUMO2)" evidence="30">
    <location>
        <position position="231"/>
    </location>
</feature>
<feature type="cross-link" description="Glycyl lysine isopeptide (Lys-Gly) (interchain with G-Cter in SUMO2)" evidence="28 29 30">
    <location>
        <position position="234"/>
    </location>
</feature>
<feature type="cross-link" description="Glycyl lysine isopeptide (Lys-Gly) (interchain with G-Cter in SUMO2)" evidence="30">
    <location>
        <position position="317"/>
    </location>
</feature>
<feature type="cross-link" description="Glycyl lysine isopeptide (Lys-Gly) (interchain with G-Cter in SUMO2)" evidence="30">
    <location>
        <position position="327"/>
    </location>
</feature>
<feature type="cross-link" description="Glycyl lysine isopeptide (Lys-Gly) (interchain with G-Cter in SUMO2)" evidence="27 30">
    <location>
        <position position="432"/>
    </location>
</feature>
<feature type="cross-link" description="Glycyl lysine isopeptide (Lys-Gly) (interchain with G-Cter in SUMO2)" evidence="30">
    <location>
        <position position="492"/>
    </location>
</feature>
<feature type="cross-link" description="Glycyl lysine isopeptide (Lys-Gly) (interchain with G-Cter in SUMO2)" evidence="30">
    <location>
        <position position="559"/>
    </location>
</feature>
<feature type="cross-link" description="Glycyl lysine isopeptide (Lys-Gly) (interchain with G-Cter in SUMO2)" evidence="30">
    <location>
        <position position="644"/>
    </location>
</feature>
<feature type="cross-link" description="Glycyl lysine isopeptide (Lys-Gly) (interchain with G-Cter in SUMO2)" evidence="30">
    <location>
        <position position="659"/>
    </location>
</feature>
<feature type="cross-link" description="Glycyl lysine isopeptide (Lys-Gly) (interchain with G-Cter in SUMO2)" evidence="30">
    <location>
        <position position="684"/>
    </location>
</feature>
<feature type="cross-link" description="Glycyl lysine isopeptide (Lys-Gly) (interchain with G-Cter in SUMO2)" evidence="28 30">
    <location>
        <position position="731"/>
    </location>
</feature>
<feature type="splice variant" id="VSP_002222" description="In isoform 2." evidence="21">
    <original>AVPARGEPQQDCCVKTELLGEETPMAADEGSAEKQAGEAHMAADGETNGSCENSDASSH</original>
    <variation>RHLWLPMKAQQRNRQERPTWLRTVRPMGLVKTAMPAVMQMLQSTLRTAQGSTPRMAPTH</variation>
    <location>
        <begin position="8"/>
        <end position="66"/>
    </location>
</feature>
<feature type="splice variant" id="VSP_002223" description="In isoform 2." evidence="21">
    <location>
        <begin position="67"/>
        <end position="1298"/>
    </location>
</feature>
<feature type="splice variant" id="VSP_040717" description="In isoform 4." evidence="22">
    <original>AGANIDTCSEDQRT</original>
    <variation>FCRLGSPRSRGCLW</variation>
    <location>
        <begin position="795"/>
        <end position="808"/>
    </location>
</feature>
<feature type="splice variant" id="VSP_040718" description="In isoform 4." evidence="22">
    <location>
        <begin position="809"/>
        <end position="1298"/>
    </location>
</feature>
<feature type="splice variant" id="VSP_002224" description="In isoform 3." evidence="20">
    <original>DGEV</original>
    <variation>ISSA</variation>
    <location>
        <begin position="1181"/>
        <end position="1184"/>
    </location>
</feature>
<feature type="splice variant" id="VSP_002225" description="In isoform 3." evidence="20">
    <location>
        <begin position="1185"/>
        <end position="1298"/>
    </location>
</feature>
<feature type="sequence variant" id="VAR_036345" description="In a breast cancer sample; somatic mutation; dbSNP:rs79514677." evidence="10">
    <original>A</original>
    <variation>V</variation>
    <location>
        <position position="43"/>
    </location>
</feature>
<feature type="sequence variant" id="VAR_027642" description="In dbSNP:rs11137198.">
    <original>A</original>
    <variation>T</variation>
    <location>
        <position position="388"/>
    </location>
</feature>
<feature type="sequence variant" id="VAR_069183" description="In KLEFS1." evidence="13">
    <original>C</original>
    <variation>Y</variation>
    <location>
        <position position="1075"/>
    </location>
</feature>
<feature type="sequence variant" id="VAR_036346" description="In a breast cancer sample; somatic mutation." evidence="10">
    <original>Y</original>
    <variation>F</variation>
    <location>
        <position position="1173"/>
    </location>
</feature>
<feature type="mutagenesis site" description="Abolishes binding to methylated RELA K310me1, histone H3K9me1 and H3K9me2." evidence="18">
    <original>W</original>
    <variation>A</variation>
    <location>
        <position position="874"/>
    </location>
</feature>
<feature type="mutagenesis site" description="Abolishes binding to methylated RELA K310me1, histone H3K9me1 and H3K9me2." evidence="18">
    <original>E</original>
    <variation>A</variation>
    <location>
        <position position="882"/>
    </location>
</feature>
<feature type="mutagenesis site" description="Abolishes binding to histone H3K9me." evidence="11">
    <original>E</original>
    <variation>A</variation>
    <location>
        <position position="905"/>
    </location>
</feature>
<feature type="mutagenesis site" description="Abolishes binding to methylated RELA K310me1, histone H3K9me1 and H3K9me2." evidence="18">
    <original>W</original>
    <variation>A</variation>
    <location>
        <position position="912"/>
    </location>
</feature>
<feature type="sequence conflict" description="In Ref. 3; AAH47504." evidence="23" ref="3">
    <original>N</original>
    <variation>D</variation>
    <location>
        <position position="555"/>
    </location>
</feature>
<feature type="sequence conflict" description="In Ref. 1; AAM09024 and 2; BAB14321." evidence="23" ref="1 2">
    <original>E</original>
    <variation>G</variation>
    <location>
        <position position="561"/>
    </location>
</feature>
<feature type="helix" evidence="33">
    <location>
        <begin position="739"/>
        <end position="748"/>
    </location>
</feature>
<feature type="helix" evidence="33">
    <location>
        <begin position="751"/>
        <end position="759"/>
    </location>
</feature>
<feature type="turn" evidence="33">
    <location>
        <begin position="769"/>
        <end position="773"/>
    </location>
</feature>
<feature type="helix" evidence="33">
    <location>
        <begin position="776"/>
        <end position="783"/>
    </location>
</feature>
<feature type="helix" evidence="33">
    <location>
        <begin position="786"/>
        <end position="795"/>
    </location>
</feature>
<feature type="helix" evidence="33">
    <location>
        <begin position="809"/>
        <end position="815"/>
    </location>
</feature>
<feature type="helix" evidence="33">
    <location>
        <begin position="819"/>
        <end position="828"/>
    </location>
</feature>
<feature type="helix" evidence="33">
    <location>
        <begin position="842"/>
        <end position="848"/>
    </location>
</feature>
<feature type="helix" evidence="33">
    <location>
        <begin position="852"/>
        <end position="860"/>
    </location>
</feature>
<feature type="helix" evidence="33">
    <location>
        <begin position="876"/>
        <end position="882"/>
    </location>
</feature>
<feature type="helix" evidence="33">
    <location>
        <begin position="886"/>
        <end position="894"/>
    </location>
</feature>
<feature type="helix" evidence="33">
    <location>
        <begin position="909"/>
        <end position="916"/>
    </location>
</feature>
<feature type="helix" evidence="33">
    <location>
        <begin position="919"/>
        <end position="927"/>
    </location>
</feature>
<feature type="helix" evidence="33">
    <location>
        <begin position="942"/>
        <end position="948"/>
    </location>
</feature>
<feature type="helix" evidence="33">
    <location>
        <begin position="952"/>
        <end position="960"/>
    </location>
</feature>
<feature type="strand" evidence="33">
    <location>
        <begin position="970"/>
        <end position="972"/>
    </location>
</feature>
<feature type="helix" evidence="33">
    <location>
        <begin position="975"/>
        <end position="978"/>
    </location>
</feature>
<feature type="helix" evidence="31">
    <location>
        <begin position="983"/>
        <end position="994"/>
    </location>
</feature>
<feature type="strand" evidence="31">
    <location>
        <begin position="1008"/>
        <end position="1012"/>
    </location>
</feature>
<feature type="turn" evidence="31">
    <location>
        <begin position="1014"/>
        <end position="1017"/>
    </location>
</feature>
<feature type="strand" evidence="31">
    <location>
        <begin position="1019"/>
        <end position="1021"/>
    </location>
</feature>
<feature type="strand" evidence="31">
    <location>
        <begin position="1025"/>
        <end position="1031"/>
    </location>
</feature>
<feature type="strand" evidence="31">
    <location>
        <begin position="1037"/>
        <end position="1040"/>
    </location>
</feature>
<feature type="strand" evidence="31">
    <location>
        <begin position="1045"/>
        <end position="1048"/>
    </location>
</feature>
<feature type="helix" evidence="31">
    <location>
        <begin position="1056"/>
        <end position="1058"/>
    </location>
</feature>
<feature type="strand" evidence="31">
    <location>
        <begin position="1065"/>
        <end position="1068"/>
    </location>
</feature>
<feature type="helix" evidence="31">
    <location>
        <begin position="1074"/>
        <end position="1078"/>
    </location>
</feature>
<feature type="strand" evidence="31">
    <location>
        <begin position="1096"/>
        <end position="1098"/>
    </location>
</feature>
<feature type="strand" evidence="31">
    <location>
        <begin position="1109"/>
        <end position="1111"/>
    </location>
</feature>
<feature type="strand" evidence="32">
    <location>
        <begin position="1115"/>
        <end position="1117"/>
    </location>
</feature>
<feature type="helix" evidence="31">
    <location>
        <begin position="1120"/>
        <end position="1122"/>
    </location>
</feature>
<feature type="strand" evidence="31">
    <location>
        <begin position="1128"/>
        <end position="1132"/>
    </location>
</feature>
<feature type="strand" evidence="31">
    <location>
        <begin position="1134"/>
        <end position="1144"/>
    </location>
</feature>
<feature type="strand" evidence="31">
    <location>
        <begin position="1151"/>
        <end position="1155"/>
    </location>
</feature>
<feature type="strand" evidence="31">
    <location>
        <begin position="1157"/>
        <end position="1161"/>
    </location>
</feature>
<feature type="helix" evidence="31">
    <location>
        <begin position="1162"/>
        <end position="1166"/>
    </location>
</feature>
<feature type="strand" evidence="31">
    <location>
        <begin position="1174"/>
        <end position="1177"/>
    </location>
</feature>
<feature type="strand" evidence="31">
    <location>
        <begin position="1180"/>
        <end position="1183"/>
    </location>
</feature>
<feature type="strand" evidence="31">
    <location>
        <begin position="1185"/>
        <end position="1193"/>
    </location>
</feature>
<feature type="helix" evidence="31">
    <location>
        <begin position="1195"/>
        <end position="1198"/>
    </location>
</feature>
<feature type="strand" evidence="31">
    <location>
        <begin position="1206"/>
        <end position="1215"/>
    </location>
</feature>
<feature type="strand" evidence="31">
    <location>
        <begin position="1223"/>
        <end position="1230"/>
    </location>
</feature>
<feature type="helix" evidence="31">
    <location>
        <begin position="1244"/>
        <end position="1250"/>
    </location>
</feature>
<feature type="turn" evidence="31">
    <location>
        <begin position="1251"/>
        <end position="1253"/>
    </location>
</feature>
<dbReference type="EC" id="2.1.1.-" evidence="7"/>
<dbReference type="EC" id="2.1.1.367" evidence="7"/>
<dbReference type="EMBL" id="AK022941">
    <property type="protein sequence ID" value="BAB14321.1"/>
    <property type="status" value="ALT_SEQ"/>
    <property type="molecule type" value="mRNA"/>
</dbReference>
<dbReference type="EMBL" id="AL590627">
    <property type="status" value="NOT_ANNOTATED_CDS"/>
    <property type="molecule type" value="Genomic_DNA"/>
</dbReference>
<dbReference type="EMBL" id="AL611925">
    <property type="status" value="NOT_ANNOTATED_CDS"/>
    <property type="molecule type" value="Genomic_DNA"/>
</dbReference>
<dbReference type="EMBL" id="BC011608">
    <property type="protein sequence ID" value="AAH11608.2"/>
    <property type="molecule type" value="mRNA"/>
</dbReference>
<dbReference type="EMBL" id="BC047504">
    <property type="protein sequence ID" value="AAH47504.1"/>
    <property type="molecule type" value="mRNA"/>
</dbReference>
<dbReference type="EMBL" id="AY083210">
    <property type="protein sequence ID" value="AAM09024.1"/>
    <property type="molecule type" value="mRNA"/>
</dbReference>
<dbReference type="EMBL" id="AB028932">
    <property type="protein sequence ID" value="BAB56104.1"/>
    <property type="molecule type" value="mRNA"/>
</dbReference>
<dbReference type="EMBL" id="AB058779">
    <property type="protein sequence ID" value="BAB47505.2"/>
    <property type="molecule type" value="mRNA"/>
</dbReference>
<dbReference type="EMBL" id="AL713772">
    <property type="protein sequence ID" value="CAD28534.1"/>
    <property type="status" value="ALT_SEQ"/>
    <property type="molecule type" value="mRNA"/>
</dbReference>
<dbReference type="CCDS" id="CCDS56595.1">
    <molecule id="Q9H9B1-4"/>
</dbReference>
<dbReference type="CCDS" id="CCDS7050.2">
    <molecule id="Q9H9B1-1"/>
</dbReference>
<dbReference type="RefSeq" id="NP_001138999.1">
    <molecule id="Q9H9B1-4"/>
    <property type="nucleotide sequence ID" value="NM_001145527.2"/>
</dbReference>
<dbReference type="RefSeq" id="NP_079033.4">
    <molecule id="Q9H9B1-1"/>
    <property type="nucleotide sequence ID" value="NM_024757.4"/>
</dbReference>
<dbReference type="PDB" id="2IGQ">
    <property type="method" value="X-ray"/>
    <property type="resolution" value="2.00 A"/>
    <property type="chains" value="A/B=982-1266"/>
</dbReference>
<dbReference type="PDB" id="2RFI">
    <property type="method" value="X-ray"/>
    <property type="resolution" value="1.59 A"/>
    <property type="chains" value="A/B=982-1266"/>
</dbReference>
<dbReference type="PDB" id="3B7B">
    <property type="method" value="X-ray"/>
    <property type="resolution" value="2.99 A"/>
    <property type="chains" value="A/B=765-999"/>
</dbReference>
<dbReference type="PDB" id="3B95">
    <property type="method" value="X-ray"/>
    <property type="resolution" value="2.99 A"/>
    <property type="chains" value="A/B=765-999"/>
</dbReference>
<dbReference type="PDB" id="3FPD">
    <property type="method" value="X-ray"/>
    <property type="resolution" value="2.40 A"/>
    <property type="chains" value="A/B=1006-1266"/>
</dbReference>
<dbReference type="PDB" id="3HNA">
    <property type="method" value="X-ray"/>
    <property type="resolution" value="1.50 A"/>
    <property type="chains" value="A/B=982-1266"/>
</dbReference>
<dbReference type="PDB" id="3MO0">
    <property type="method" value="X-ray"/>
    <property type="resolution" value="2.78 A"/>
    <property type="chains" value="A/B=982-1266"/>
</dbReference>
<dbReference type="PDB" id="3MO2">
    <property type="method" value="X-ray"/>
    <property type="resolution" value="2.49 A"/>
    <property type="chains" value="A/B/C/D=982-1266"/>
</dbReference>
<dbReference type="PDB" id="3MO5">
    <property type="method" value="X-ray"/>
    <property type="resolution" value="2.14 A"/>
    <property type="chains" value="A/B/C/D=982-1266"/>
</dbReference>
<dbReference type="PDB" id="3SW9">
    <property type="method" value="X-ray"/>
    <property type="resolution" value="3.05 A"/>
    <property type="chains" value="A/B=982-1266"/>
</dbReference>
<dbReference type="PDB" id="3SWC">
    <property type="method" value="X-ray"/>
    <property type="resolution" value="2.33 A"/>
    <property type="chains" value="A/B=982-1266"/>
</dbReference>
<dbReference type="PDB" id="4I51">
    <property type="method" value="X-ray"/>
    <property type="resolution" value="1.90 A"/>
    <property type="chains" value="A/B=982-1266"/>
</dbReference>
<dbReference type="PDB" id="5TTG">
    <property type="method" value="X-ray"/>
    <property type="resolution" value="1.66 A"/>
    <property type="chains" value="A/B=982-1266"/>
</dbReference>
<dbReference type="PDB" id="5TUZ">
    <property type="method" value="X-ray"/>
    <property type="resolution" value="1.95 A"/>
    <property type="chains" value="A/B=1006-1266"/>
</dbReference>
<dbReference type="PDB" id="5V9J">
    <property type="method" value="X-ray"/>
    <property type="resolution" value="1.74 A"/>
    <property type="chains" value="A/B=982-1266"/>
</dbReference>
<dbReference type="PDB" id="5VSD">
    <property type="method" value="X-ray"/>
    <property type="resolution" value="1.85 A"/>
    <property type="chains" value="A/B=1006-1266"/>
</dbReference>
<dbReference type="PDB" id="5VSF">
    <property type="method" value="X-ray"/>
    <property type="resolution" value="1.70 A"/>
    <property type="chains" value="A/B=1006-1266"/>
</dbReference>
<dbReference type="PDB" id="6BY9">
    <property type="method" value="X-ray"/>
    <property type="resolution" value="2.30 A"/>
    <property type="chains" value="A=672-999"/>
</dbReference>
<dbReference type="PDB" id="6MBO">
    <property type="method" value="X-ray"/>
    <property type="resolution" value="1.59 A"/>
    <property type="chains" value="A/B=1006-1266"/>
</dbReference>
<dbReference type="PDB" id="6MBP">
    <property type="method" value="X-ray"/>
    <property type="resolution" value="1.95 A"/>
    <property type="chains" value="A/B=1006-1266"/>
</dbReference>
<dbReference type="PDB" id="7T7M">
    <property type="method" value="X-ray"/>
    <property type="resolution" value="2.85 A"/>
    <property type="chains" value="A/B/C/D=982-1266"/>
</dbReference>
<dbReference type="PDB" id="8XPT">
    <property type="method" value="X-ray"/>
    <property type="resolution" value="3.35 A"/>
    <property type="chains" value="A/B/C/D=982-1266"/>
</dbReference>
<dbReference type="PDBsum" id="2IGQ"/>
<dbReference type="PDBsum" id="2RFI"/>
<dbReference type="PDBsum" id="3B7B"/>
<dbReference type="PDBsum" id="3B95"/>
<dbReference type="PDBsum" id="3FPD"/>
<dbReference type="PDBsum" id="3HNA"/>
<dbReference type="PDBsum" id="3MO0"/>
<dbReference type="PDBsum" id="3MO2"/>
<dbReference type="PDBsum" id="3MO5"/>
<dbReference type="PDBsum" id="3SW9"/>
<dbReference type="PDBsum" id="3SWC"/>
<dbReference type="PDBsum" id="4I51"/>
<dbReference type="PDBsum" id="5TTG"/>
<dbReference type="PDBsum" id="5TUZ"/>
<dbReference type="PDBsum" id="5V9J"/>
<dbReference type="PDBsum" id="5VSD"/>
<dbReference type="PDBsum" id="5VSF"/>
<dbReference type="PDBsum" id="6BY9"/>
<dbReference type="PDBsum" id="6MBO"/>
<dbReference type="PDBsum" id="6MBP"/>
<dbReference type="PDBsum" id="7T7M"/>
<dbReference type="PDBsum" id="8XPT"/>
<dbReference type="SMR" id="Q9H9B1"/>
<dbReference type="BioGRID" id="122908">
    <property type="interactions" value="184"/>
</dbReference>
<dbReference type="CORUM" id="Q9H9B1"/>
<dbReference type="DIP" id="DIP-34585N"/>
<dbReference type="FunCoup" id="Q9H9B1">
    <property type="interactions" value="4651"/>
</dbReference>
<dbReference type="IntAct" id="Q9H9B1">
    <property type="interactions" value="126"/>
</dbReference>
<dbReference type="MINT" id="Q9H9B1"/>
<dbReference type="STRING" id="9606.ENSP00000417980"/>
<dbReference type="BindingDB" id="Q9H9B1"/>
<dbReference type="ChEMBL" id="CHEMBL6031"/>
<dbReference type="DrugCentral" id="Q9H9B1"/>
<dbReference type="GuidetoPHARMACOLOGY" id="2651"/>
<dbReference type="GlyCosmos" id="Q9H9B1">
    <property type="glycosylation" value="1 site, 3 glycans"/>
</dbReference>
<dbReference type="GlyGen" id="Q9H9B1">
    <property type="glycosylation" value="3 sites, 4 N-linked glycans (1 site), 1 O-linked glycan (1 site)"/>
</dbReference>
<dbReference type="iPTMnet" id="Q9H9B1"/>
<dbReference type="PhosphoSitePlus" id="Q9H9B1"/>
<dbReference type="SwissPalm" id="Q9H9B1"/>
<dbReference type="BioMuta" id="EHMT1"/>
<dbReference type="DMDM" id="325511404"/>
<dbReference type="jPOST" id="Q9H9B1"/>
<dbReference type="MassIVE" id="Q9H9B1"/>
<dbReference type="PaxDb" id="9606-ENSP00000417980"/>
<dbReference type="PeptideAtlas" id="Q9H9B1"/>
<dbReference type="ProteomicsDB" id="81307">
    <molecule id="Q9H9B1-1"/>
</dbReference>
<dbReference type="ProteomicsDB" id="81308">
    <molecule id="Q9H9B1-2"/>
</dbReference>
<dbReference type="ProteomicsDB" id="81309">
    <molecule id="Q9H9B1-3"/>
</dbReference>
<dbReference type="ProteomicsDB" id="81310">
    <molecule id="Q9H9B1-4"/>
</dbReference>
<dbReference type="Pumba" id="Q9H9B1"/>
<dbReference type="ABCD" id="Q9H9B1">
    <property type="antibodies" value="1 sequenced antibody"/>
</dbReference>
<dbReference type="Antibodypedia" id="32511">
    <property type="antibodies" value="526 antibodies from 31 providers"/>
</dbReference>
<dbReference type="DNASU" id="79813"/>
<dbReference type="Ensembl" id="ENST00000371394.6">
    <molecule id="Q9H9B1-2"/>
    <property type="protein sequence ID" value="ENSP00000485945.1"/>
    <property type="gene ID" value="ENSG00000181090.21"/>
</dbReference>
<dbReference type="Ensembl" id="ENST00000460843.6">
    <molecule id="Q9H9B1-1"/>
    <property type="protein sequence ID" value="ENSP00000417980.1"/>
    <property type="gene ID" value="ENSG00000181090.21"/>
</dbReference>
<dbReference type="Ensembl" id="ENST00000462484.5">
    <molecule id="Q9H9B1-4"/>
    <property type="protein sequence ID" value="ENSP00000417328.1"/>
    <property type="gene ID" value="ENSG00000181090.21"/>
</dbReference>
<dbReference type="GeneID" id="79813"/>
<dbReference type="KEGG" id="hsa:79813"/>
<dbReference type="MANE-Select" id="ENST00000460843.6">
    <property type="protein sequence ID" value="ENSP00000417980.1"/>
    <property type="RefSeq nucleotide sequence ID" value="NM_024757.5"/>
    <property type="RefSeq protein sequence ID" value="NP_079033.4"/>
</dbReference>
<dbReference type="UCSC" id="uc004coa.3">
    <molecule id="Q9H9B1-1"/>
    <property type="organism name" value="human"/>
</dbReference>
<dbReference type="AGR" id="HGNC:24650"/>
<dbReference type="CTD" id="79813"/>
<dbReference type="DisGeNET" id="79813"/>
<dbReference type="GeneCards" id="EHMT1"/>
<dbReference type="GeneReviews" id="EHMT1"/>
<dbReference type="HGNC" id="HGNC:24650">
    <property type="gene designation" value="EHMT1"/>
</dbReference>
<dbReference type="HPA" id="ENSG00000181090">
    <property type="expression patterns" value="Low tissue specificity"/>
</dbReference>
<dbReference type="MalaCards" id="EHMT1"/>
<dbReference type="MIM" id="607001">
    <property type="type" value="gene"/>
</dbReference>
<dbReference type="MIM" id="610253">
    <property type="type" value="phenotype"/>
</dbReference>
<dbReference type="neXtProt" id="NX_Q9H9B1"/>
<dbReference type="OpenTargets" id="ENSG00000181090"/>
<dbReference type="Orphanet" id="96147">
    <property type="disease" value="Kleefstra syndrome due to 9q34 microdeletion"/>
</dbReference>
<dbReference type="Orphanet" id="261652">
    <property type="disease" value="Kleefstra syndrome due to a point mutation"/>
</dbReference>
<dbReference type="PharmGKB" id="PA134941393"/>
<dbReference type="VEuPathDB" id="HostDB:ENSG00000181090"/>
<dbReference type="eggNOG" id="KOG1082">
    <property type="taxonomic scope" value="Eukaryota"/>
</dbReference>
<dbReference type="GeneTree" id="ENSGT00940000156002"/>
<dbReference type="HOGENOM" id="CLU_005790_3_0_1"/>
<dbReference type="InParanoid" id="Q9H9B1"/>
<dbReference type="OMA" id="MPKSIMG"/>
<dbReference type="OrthoDB" id="5792673at2759"/>
<dbReference type="PAN-GO" id="Q9H9B1">
    <property type="GO annotations" value="8 GO annotations based on evolutionary models"/>
</dbReference>
<dbReference type="PhylomeDB" id="Q9H9B1"/>
<dbReference type="TreeFam" id="TF106443"/>
<dbReference type="BioCyc" id="MetaCyc:HS17627-MONOMER"/>
<dbReference type="BRENDA" id="2.1.1.367">
    <property type="organism ID" value="2681"/>
</dbReference>
<dbReference type="BRENDA" id="2.1.1.368">
    <property type="organism ID" value="2681"/>
</dbReference>
<dbReference type="PathwayCommons" id="Q9H9B1"/>
<dbReference type="Reactome" id="R-HSA-2559582">
    <property type="pathway name" value="Senescence-Associated Secretory Phenotype (SASP)"/>
</dbReference>
<dbReference type="Reactome" id="R-HSA-3214841">
    <property type="pathway name" value="PKMTs methylate histone lysines"/>
</dbReference>
<dbReference type="Reactome" id="R-HSA-6804760">
    <property type="pathway name" value="Regulation of TP53 Activity through Methylation"/>
</dbReference>
<dbReference type="Reactome" id="R-HSA-8853884">
    <property type="pathway name" value="Transcriptional Regulation by VENTX"/>
</dbReference>
<dbReference type="Reactome" id="R-HSA-8953750">
    <property type="pathway name" value="Transcriptional Regulation by E2F6"/>
</dbReference>
<dbReference type="Reactome" id="R-HSA-9843970">
    <property type="pathway name" value="Regulation of endogenous retroelements by the Human Silencing Hub (HUSH) complex"/>
</dbReference>
<dbReference type="SignaLink" id="Q9H9B1"/>
<dbReference type="SIGNOR" id="Q9H9B1"/>
<dbReference type="BioGRID-ORCS" id="79813">
    <property type="hits" value="76 hits in 1180 CRISPR screens"/>
</dbReference>
<dbReference type="ChiTaRS" id="EHMT1">
    <property type="organism name" value="human"/>
</dbReference>
<dbReference type="EvolutionaryTrace" id="Q9H9B1"/>
<dbReference type="GeneWiki" id="EHMT1"/>
<dbReference type="GenomeRNAi" id="79813"/>
<dbReference type="Pharos" id="Q9H9B1">
    <property type="development level" value="Tchem"/>
</dbReference>
<dbReference type="PRO" id="PR:Q9H9B1"/>
<dbReference type="Proteomes" id="UP000005640">
    <property type="component" value="Chromosome 9"/>
</dbReference>
<dbReference type="RNAct" id="Q9H9B1">
    <property type="molecule type" value="protein"/>
</dbReference>
<dbReference type="Bgee" id="ENSG00000181090">
    <property type="expression patterns" value="Expressed in sural nerve and 172 other cell types or tissues"/>
</dbReference>
<dbReference type="ExpressionAtlas" id="Q9H9B1">
    <property type="expression patterns" value="baseline and differential"/>
</dbReference>
<dbReference type="GO" id="GO:0000785">
    <property type="term" value="C:chromatin"/>
    <property type="evidence" value="ECO:0000318"/>
    <property type="project" value="GO_Central"/>
</dbReference>
<dbReference type="GO" id="GO:0016604">
    <property type="term" value="C:nuclear body"/>
    <property type="evidence" value="ECO:0000314"/>
    <property type="project" value="HPA"/>
</dbReference>
<dbReference type="GO" id="GO:0005654">
    <property type="term" value="C:nucleoplasm"/>
    <property type="evidence" value="ECO:0000314"/>
    <property type="project" value="HPA"/>
</dbReference>
<dbReference type="GO" id="GO:0005634">
    <property type="term" value="C:nucleus"/>
    <property type="evidence" value="ECO:0000314"/>
    <property type="project" value="MGI"/>
</dbReference>
<dbReference type="GO" id="GO:0070742">
    <property type="term" value="F:C2H2 zinc finger domain binding"/>
    <property type="evidence" value="ECO:0007669"/>
    <property type="project" value="Ensembl"/>
</dbReference>
<dbReference type="GO" id="GO:0046976">
    <property type="term" value="F:histone H3K27 methyltransferase activity"/>
    <property type="evidence" value="ECO:0000250"/>
    <property type="project" value="UniProtKB"/>
</dbReference>
<dbReference type="GO" id="GO:0046974">
    <property type="term" value="F:histone H3K9 methyltransferase activity"/>
    <property type="evidence" value="ECO:0000314"/>
    <property type="project" value="UniProtKB"/>
</dbReference>
<dbReference type="GO" id="GO:0140947">
    <property type="term" value="F:histone H3K9me2 methyltransferase activity"/>
    <property type="evidence" value="ECO:0007669"/>
    <property type="project" value="RHEA"/>
</dbReference>
<dbReference type="GO" id="GO:0008168">
    <property type="term" value="F:methyltransferase activity"/>
    <property type="evidence" value="ECO:0000314"/>
    <property type="project" value="UniProtKB"/>
</dbReference>
<dbReference type="GO" id="GO:0002039">
    <property type="term" value="F:p53 binding"/>
    <property type="evidence" value="ECO:0000353"/>
    <property type="project" value="UniProtKB"/>
</dbReference>
<dbReference type="GO" id="GO:0016279">
    <property type="term" value="F:protein-lysine N-methyltransferase activity"/>
    <property type="evidence" value="ECO:0000314"/>
    <property type="project" value="UniProtKB"/>
</dbReference>
<dbReference type="GO" id="GO:0001222">
    <property type="term" value="F:transcription corepressor binding"/>
    <property type="evidence" value="ECO:0000353"/>
    <property type="project" value="ARUK-UCL"/>
</dbReference>
<dbReference type="GO" id="GO:0008270">
    <property type="term" value="F:zinc ion binding"/>
    <property type="evidence" value="ECO:0007669"/>
    <property type="project" value="InterPro"/>
</dbReference>
<dbReference type="GO" id="GO:0006325">
    <property type="term" value="P:chromatin organization"/>
    <property type="evidence" value="ECO:0000314"/>
    <property type="project" value="UniProtKB"/>
</dbReference>
<dbReference type="GO" id="GO:0006346">
    <property type="term" value="P:DNA methylation-dependent constitutive heterochromatin formation"/>
    <property type="evidence" value="ECO:0000250"/>
    <property type="project" value="UniProtKB"/>
</dbReference>
<dbReference type="GO" id="GO:0040029">
    <property type="term" value="P:epigenetic regulation of gene expression"/>
    <property type="evidence" value="ECO:0000318"/>
    <property type="project" value="GO_Central"/>
</dbReference>
<dbReference type="GO" id="GO:0140718">
    <property type="term" value="P:facultative heterochromatin formation"/>
    <property type="evidence" value="ECO:0007669"/>
    <property type="project" value="Ensembl"/>
</dbReference>
<dbReference type="GO" id="GO:0045892">
    <property type="term" value="P:negative regulation of DNA-templated transcription"/>
    <property type="evidence" value="ECO:0000250"/>
    <property type="project" value="UniProtKB"/>
</dbReference>
<dbReference type="GO" id="GO:0000122">
    <property type="term" value="P:negative regulation of transcription by RNA polymerase II"/>
    <property type="evidence" value="ECO:0000318"/>
    <property type="project" value="GO_Central"/>
</dbReference>
<dbReference type="GO" id="GO:0018027">
    <property type="term" value="P:peptidyl-lysine dimethylation"/>
    <property type="evidence" value="ECO:0000314"/>
    <property type="project" value="UniProtKB"/>
</dbReference>
<dbReference type="GO" id="GO:0018026">
    <property type="term" value="P:peptidyl-lysine monomethylation"/>
    <property type="evidence" value="ECO:0000250"/>
    <property type="project" value="UniProtKB"/>
</dbReference>
<dbReference type="GO" id="GO:0120162">
    <property type="term" value="P:positive regulation of cold-induced thermogenesis"/>
    <property type="evidence" value="ECO:0000250"/>
    <property type="project" value="YuBioLab"/>
</dbReference>
<dbReference type="GO" id="GO:0045995">
    <property type="term" value="P:regulation of embryonic development"/>
    <property type="evidence" value="ECO:0000250"/>
    <property type="project" value="UniProtKB"/>
</dbReference>
<dbReference type="GO" id="GO:0060992">
    <property type="term" value="P:response to fungicide"/>
    <property type="evidence" value="ECO:0007669"/>
    <property type="project" value="Ensembl"/>
</dbReference>
<dbReference type="CDD" id="cd20905">
    <property type="entry name" value="EHMT_ZBD"/>
    <property type="match status" value="1"/>
</dbReference>
<dbReference type="CDD" id="cd10535">
    <property type="entry name" value="SET_EHMT1"/>
    <property type="match status" value="1"/>
</dbReference>
<dbReference type="FunFam" id="2.170.270.10:FF:000005">
    <property type="entry name" value="Euchromatic histone-lysine N-methyltransferase 2"/>
    <property type="match status" value="1"/>
</dbReference>
<dbReference type="FunFam" id="1.25.40.20:FF:000029">
    <property type="entry name" value="histone-lysine N-methyltransferase EHMT1 isoform X2"/>
    <property type="match status" value="1"/>
</dbReference>
<dbReference type="Gene3D" id="1.25.40.20">
    <property type="entry name" value="Ankyrin repeat-containing domain"/>
    <property type="match status" value="1"/>
</dbReference>
<dbReference type="Gene3D" id="2.170.270.10">
    <property type="entry name" value="SET domain"/>
    <property type="match status" value="1"/>
</dbReference>
<dbReference type="IDEAL" id="IID00500"/>
<dbReference type="InterPro" id="IPR002110">
    <property type="entry name" value="Ankyrin_rpt"/>
</dbReference>
<dbReference type="InterPro" id="IPR036770">
    <property type="entry name" value="Ankyrin_rpt-contain_sf"/>
</dbReference>
<dbReference type="InterPro" id="IPR043550">
    <property type="entry name" value="EHMT1/EHMT2"/>
</dbReference>
<dbReference type="InterPro" id="IPR047762">
    <property type="entry name" value="EHMT_CRR"/>
</dbReference>
<dbReference type="InterPro" id="IPR007728">
    <property type="entry name" value="Pre-SET_dom"/>
</dbReference>
<dbReference type="InterPro" id="IPR001214">
    <property type="entry name" value="SET_dom"/>
</dbReference>
<dbReference type="InterPro" id="IPR046341">
    <property type="entry name" value="SET_dom_sf"/>
</dbReference>
<dbReference type="InterPro" id="IPR038035">
    <property type="entry name" value="SET_EHMT1"/>
</dbReference>
<dbReference type="PANTHER" id="PTHR46307">
    <property type="entry name" value="G9A, ISOFORM B"/>
    <property type="match status" value="1"/>
</dbReference>
<dbReference type="PANTHER" id="PTHR46307:SF2">
    <property type="entry name" value="HISTONE-LYSINE N-METHYLTRANSFERASE EHMT1"/>
    <property type="match status" value="1"/>
</dbReference>
<dbReference type="Pfam" id="PF12796">
    <property type="entry name" value="Ank_2"/>
    <property type="match status" value="2"/>
</dbReference>
<dbReference type="Pfam" id="PF13637">
    <property type="entry name" value="Ank_4"/>
    <property type="match status" value="1"/>
</dbReference>
<dbReference type="Pfam" id="PF21533">
    <property type="entry name" value="EHMT1-2_CRR"/>
    <property type="match status" value="1"/>
</dbReference>
<dbReference type="Pfam" id="PF05033">
    <property type="entry name" value="Pre-SET"/>
    <property type="match status" value="1"/>
</dbReference>
<dbReference type="Pfam" id="PF00856">
    <property type="entry name" value="SET"/>
    <property type="match status" value="1"/>
</dbReference>
<dbReference type="PRINTS" id="PR01415">
    <property type="entry name" value="ANKYRIN"/>
</dbReference>
<dbReference type="SMART" id="SM00248">
    <property type="entry name" value="ANK"/>
    <property type="match status" value="7"/>
</dbReference>
<dbReference type="SMART" id="SM00468">
    <property type="entry name" value="PreSET"/>
    <property type="match status" value="1"/>
</dbReference>
<dbReference type="SMART" id="SM00317">
    <property type="entry name" value="SET"/>
    <property type="match status" value="1"/>
</dbReference>
<dbReference type="SUPFAM" id="SSF48403">
    <property type="entry name" value="Ankyrin repeat"/>
    <property type="match status" value="1"/>
</dbReference>
<dbReference type="SUPFAM" id="SSF82199">
    <property type="entry name" value="SET domain"/>
    <property type="match status" value="1"/>
</dbReference>
<dbReference type="PROSITE" id="PS50297">
    <property type="entry name" value="ANK_REP_REGION"/>
    <property type="match status" value="1"/>
</dbReference>
<dbReference type="PROSITE" id="PS50088">
    <property type="entry name" value="ANK_REPEAT"/>
    <property type="match status" value="5"/>
</dbReference>
<dbReference type="PROSITE" id="PS50867">
    <property type="entry name" value="PRE_SET"/>
    <property type="match status" value="1"/>
</dbReference>
<dbReference type="PROSITE" id="PS50280">
    <property type="entry name" value="SET"/>
    <property type="match status" value="1"/>
</dbReference>
<protein>
    <recommendedName>
        <fullName>Histone-lysine N-methyltransferase EHMT1</fullName>
        <ecNumber evidence="7">2.1.1.-</ecNumber>
        <ecNumber evidence="7">2.1.1.367</ecNumber>
    </recommendedName>
    <alternativeName>
        <fullName>Euchromatic histone-lysine N-methyltransferase 1</fullName>
        <shortName>Eu-HMTase1</shortName>
    </alternativeName>
    <alternativeName>
        <fullName>G9a-like protein 1</fullName>
        <shortName>GLP</shortName>
        <shortName>GLP1</shortName>
    </alternativeName>
    <alternativeName>
        <fullName>Histone H3-K9 methyltransferase 5</fullName>
        <shortName>H3-K9-HMTase 5</shortName>
    </alternativeName>
    <alternativeName>
        <fullName>Lysine N-methyltransferase 1D</fullName>
    </alternativeName>
</protein>
<proteinExistence type="evidence at protein level"/>